<keyword id="KW-0002">3D-structure</keyword>
<keyword id="KW-0007">Acetylation</keyword>
<keyword id="KW-0025">Alternative splicing</keyword>
<keyword id="KW-0050">Antiport</keyword>
<keyword id="KW-1003">Cell membrane</keyword>
<keyword id="KW-0225">Disease variant</keyword>
<keyword id="KW-0290">Folate-binding</keyword>
<keyword id="KW-0325">Glycoprotein</keyword>
<keyword id="KW-0360">Hereditary hemolytic anemia</keyword>
<keyword id="KW-0472">Membrane</keyword>
<keyword id="KW-0597">Phosphoprotein</keyword>
<keyword id="KW-1267">Proteomics identification</keyword>
<keyword id="KW-1185">Reference proteome</keyword>
<keyword id="KW-0812">Transmembrane</keyword>
<keyword id="KW-1133">Transmembrane helix</keyword>
<keyword id="KW-0813">Transport</keyword>
<sequence length="591" mass="64868">MVPSSPAVEKQVPVEPGPDPELRSWRHLVCYLCFYGFMAQIRPGESFITPYLLGPDKNFTREQVTNEITPVLSYSYLAVLVPVFLLTDYLRYTPVLLLQGLSFVSVWLLLLLGHSVAHMQLMELFYSVTMAARIAYSSYIFSLVRPARYQRVAGYSRAAVLLGVFTSSVLGQLLVTVGRVSFSTLNYISLAFLTFSVVLALFLKRPKRSLFFNRDDRGRCETSASELERMNPGPGGKLGHALRVACGDSVLARMLRELGDSLRRPQLRLWSLWWVFNSAGYYLVVYYVHILWNEVDPTTNSARVYNGAADAASTLLGAITSFAAGFVKIRWARWSKLLIAGVTATQAGLVFLLAHTRHPSSIWLCYAAFVLFRGSYQFLVPIATFQIASSLSKELCALVFGVNTFFATIVKTIITFIVSDVRGLGLPVRKQFQLYSVYFLILSIIYFLGAMLDGLRHCQRGHHPRQPPAQGLRSAAEEKAAQALSVQDKGLGGLQPAQSPPLSPEDSLGAVGPASLEQRQSDPYLAQAPAPQAAEFLSPVTTPSPCTLCSAQASGPEAADETCPQLAVHPPGVSKLGLQCLPSDGVQNVNQ</sequence>
<comment type="function">
    <text evidence="4 5 6 8 9 10 11 12 13 14 16 17 18 19 20 21 23">Antiporter that mediates the import of reduced folates or a subset of cyclic dinucleotides, driven by the export of organic anions (PubMed:10787414, PubMed:15337749, PubMed:16115875, PubMed:22554803, PubMed:31126740, PubMed:31511694, PubMed:32276275, PubMed:36071163, PubMed:36265513, PubMed:36575193, PubMed:7826387, PubMed:9041240). Acts as an importer of immunoreactive cyclic dinucleotides, such as cyclic GMP-AMP (2'-3'-cGAMP), an immune messenger produced in response to DNA virus in the cytosol, and its linkage isomer 3'-3'-cGAMP, thus playing a role in triggering larger immune responses (PubMed:31126740, PubMed:31511694, PubMed:36745868). Mechanistically, acts as a secondary active transporter, which exports intracellular organic anions down their concentration gradients to facilitate the uptake of its substrates (PubMed:22554803, PubMed:31126740, PubMed:31511694). Has high affinity for N5-methyltetrahydrofolate, the predominant circulating form of folate (PubMed:10787414, PubMed:14609557, PubMed:22554803, PubMed:36071163, PubMed:36265513, PubMed:36575193). Also mediates the import of antifolate drug methotrexate (PubMed:22554803, PubMed:36071163, PubMed:7615551, PubMed:7641195, PubMed:9767079). 5-amino-4-imidazolecarboxamide riboside (AICAR), when phosphorylated to AICAR monophosphate, can serve as an organic anion for antiporter activity (PubMed:22554803).</text>
</comment>
<comment type="catalytic activity">
    <reaction evidence="5 9 13 14 16">
        <text>5-amino-1-(5-phospho-beta-D-ribosyl)imidazole-4-carboxamide(in) + (6S)-5-methyl-5,6,7,8-tetrahydrofolate(out) = 5-amino-1-(5-phospho-beta-D-ribosyl)imidazole-4-carboxamide(out) + (6S)-5-methyl-5,6,7,8-tetrahydrofolate(in)</text>
        <dbReference type="Rhea" id="RHEA:60460"/>
        <dbReference type="ChEBI" id="CHEBI:18608"/>
        <dbReference type="ChEBI" id="CHEBI:58475"/>
    </reaction>
    <physiologicalReaction direction="left-to-right" evidence="5 9">
        <dbReference type="Rhea" id="RHEA:60461"/>
    </physiologicalReaction>
</comment>
<comment type="catalytic activity">
    <reaction evidence="10 14">
        <text>2',3'-cGAMP(out) + 5-amino-1-(5-phospho-beta-D-ribosyl)imidazole-4-carboxamide(in) = 2',3'-cGAMP(in) + 5-amino-1-(5-phospho-beta-D-ribosyl)imidazole-4-carboxamide(out)</text>
        <dbReference type="Rhea" id="RHEA:60464"/>
        <dbReference type="ChEBI" id="CHEBI:58475"/>
        <dbReference type="ChEBI" id="CHEBI:143093"/>
    </reaction>
    <physiologicalReaction direction="left-to-right" evidence="10 39">
        <dbReference type="Rhea" id="RHEA:60465"/>
    </physiologicalReaction>
</comment>
<comment type="catalytic activity">
    <reaction evidence="10">
        <text>3',3'-cGAMP(out) + 5-amino-1-(5-phospho-beta-D-ribosyl)imidazole-4-carboxamide(in) = 3',3'-cGAMP(in) + 5-amino-1-(5-phospho-beta-D-ribosyl)imidazole-4-carboxamide(out)</text>
        <dbReference type="Rhea" id="RHEA:60468"/>
        <dbReference type="ChEBI" id="CHEBI:58475"/>
        <dbReference type="ChEBI" id="CHEBI:71501"/>
    </reaction>
    <physiologicalReaction direction="left-to-right" evidence="10">
        <dbReference type="Rhea" id="RHEA:60469"/>
    </physiologicalReaction>
</comment>
<comment type="interaction">
    <interactant intactId="EBI-17438674">
        <id>P41440-3</id>
    </interactant>
    <interactant intactId="EBI-12084444">
        <id>Q7Z3Y9</id>
        <label>KRT26</label>
    </interactant>
    <organismsDiffer>false</organismsDiffer>
    <experiments>3</experiments>
</comment>
<comment type="subcellular location">
    <subcellularLocation>
        <location evidence="3 4 6 8 13 14 16 17 23">Cell membrane</location>
        <topology evidence="13 14 16">Multi-pass membrane protein</topology>
    </subcellularLocation>
    <subcellularLocation>
        <location evidence="4">Apical cell membrane</location>
        <topology evidence="13 14 16">Multi-pass membrane protein</topology>
    </subcellularLocation>
    <subcellularLocation>
        <location evidence="4">Basolateral cell membrane</location>
        <topology evidence="13 14 16">Multi-pass membrane protein</topology>
    </subcellularLocation>
</comment>
<comment type="alternative products">
    <event type="alternative splicing"/>
    <isoform>
        <id>P41440-1</id>
        <name>1</name>
        <sequence type="displayed"/>
    </isoform>
    <isoform>
        <id>P41440-2</id>
        <name>2</name>
        <sequence type="described" ref="VSP_042891"/>
    </isoform>
    <isoform>
        <id>P41440-3</id>
        <name>3</name>
        <sequence type="described" ref="VSP_044497"/>
    </isoform>
</comment>
<comment type="tissue specificity">
    <text evidence="20">Placenta, liver, and to a much smaller extent, in lung.</text>
</comment>
<comment type="domain">
    <text evidence="14">Has separate binding pockets for folates and cyclic dinucleotides (PubMed:36265513). Two cyclic dinucleotides can be accommodated in the binding pocket and they are likely transported at the same time (PubMed:36265513).</text>
</comment>
<comment type="disease" evidence="12">
    <disease id="DI-06089">
        <name>Megaloblastic anemia, folate-responsive</name>
        <acronym>MEGAF</acronym>
        <description>An autosomal recessive metabolic disorder characterized by megaloblastic anemia resulting from decreased folate transport into erythrocytes. Disease manifestations include hemolytic anemia, hyperhomocysteinemia, and low vitamin B12. Serum folate levels are normal, but erythrocyte folate levels are decreased. Treatment with oral folate corrects the anemia and normalizes homocysteine.</description>
        <dbReference type="MIM" id="601775"/>
    </disease>
    <text>The disease is caused by variants affecting the gene represented in this entry.</text>
</comment>
<comment type="disease" evidence="15 17">
    <disease id="DI-06794">
        <name>Immunodeficiency 114, folate-responsive</name>
        <acronym>IMD114</acronym>
        <description>An autosomal recessive immunologic disorder manifesting in early infancy and characterized by recurrent skin and respiratory infections, mucosal bleeding, oral ulcers, chronic diarrhea, and poor overall growth. Affected individuals have lymphopenia, low serum immunoglobulins, and impaired T cell proliferation. Some patients have global developmental delay.</description>
        <dbReference type="MIM" id="620603"/>
    </disease>
    <text>The disease is caused by variants affecting the gene represented in this entry.</text>
</comment>
<comment type="similarity">
    <text evidence="34">Belongs to the reduced folate carrier (RFC) transporter (TC 2.A.48) family.</text>
</comment>
<comment type="sequence caution" evidence="34">
    <conflict type="erroneous gene model prediction">
        <sequence resource="EMBL-CDS" id="CAB90483"/>
    </conflict>
</comment>
<feature type="chain" id="PRO_0000178660" description="Reduced folate transporter">
    <location>
        <begin position="1"/>
        <end position="591"/>
    </location>
</feature>
<feature type="topological domain" description="Cytoplasmic" evidence="13 14 16 41 42 43 44 45 46 47 48 49 50 51 52">
    <location>
        <begin position="1"/>
        <end position="29"/>
    </location>
</feature>
<feature type="transmembrane region" description="Helical; Name=1" evidence="13 14 16 41 42 43 44 45 46 47 48 49 50 51 52">
    <location>
        <begin position="30"/>
        <end position="50"/>
    </location>
</feature>
<feature type="topological domain" description="Extracellular" evidence="13 14 16 41 42 43 44 45 46 47 48 49 50 51 52">
    <location>
        <begin position="51"/>
        <end position="64"/>
    </location>
</feature>
<feature type="transmembrane region" description="Helical; Name=2" evidence="13 14 16 41 42 43 44 45 46 47 48 49 50 51 52">
    <location>
        <begin position="65"/>
        <end position="87"/>
    </location>
</feature>
<feature type="topological domain" description="Cytoplasmic" evidence="13 14 16 41 42 43 44 45 46 47 48 49 50 51 52">
    <location>
        <begin position="88"/>
        <end position="91"/>
    </location>
</feature>
<feature type="transmembrane region" description="Helical; Name=3" evidence="13 14 16 41 42 43 44 45 46 47 48 49 50 51 52">
    <location>
        <begin position="92"/>
        <end position="112"/>
    </location>
</feature>
<feature type="topological domain" description="Extracellular" evidence="13 14 16 41 42 43 44 45 46 47 48 49 50 51 52">
    <location>
        <begin position="113"/>
        <end position="116"/>
    </location>
</feature>
<feature type="transmembrane region" description="Helical; Name=4" evidence="13 14 16 41 42 43 44 45 46 47 48 49 50 51 52">
    <location>
        <begin position="117"/>
        <end position="139"/>
    </location>
</feature>
<feature type="topological domain" description="Cytoplasmic" evidence="13 14 16 41 42 43 44 45 46 47 48 49 50 51 52">
    <location>
        <begin position="140"/>
        <end position="153"/>
    </location>
</feature>
<feature type="transmembrane region" description="Helical; Name=5" evidence="13 14 16 41 42 43 44 45 46 47 48 49 50 51 52">
    <location>
        <begin position="154"/>
        <end position="178"/>
    </location>
</feature>
<feature type="topological domain" description="Extracellular" evidence="13 14 16 41 42 43 44 45 46 47 48 49 50 51 52">
    <location>
        <begin position="179"/>
        <end position="183"/>
    </location>
</feature>
<feature type="transmembrane region" description="Helical; Name=6" evidence="13 14 16 41 42 43 44 45 46 47 48 49 50 51 52">
    <location>
        <begin position="184"/>
        <end position="202"/>
    </location>
</feature>
<feature type="topological domain" description="Cytoplasmic" evidence="13 14 16 41 42 43 44 45 46 47 48 49 50 51 52">
    <location>
        <begin position="203"/>
        <end position="266"/>
    </location>
</feature>
<feature type="transmembrane region" description="Helical; Name=7" evidence="13 14 16 41 42 43 44 45 46 47 48 49 50 51 52">
    <location>
        <begin position="267"/>
        <end position="292"/>
    </location>
</feature>
<feature type="topological domain" description="Extracellular" evidence="13 14 16 41 42 43 44 45 46 47 48 49 50 51 52">
    <location>
        <begin position="293"/>
        <end position="304"/>
    </location>
</feature>
<feature type="transmembrane region" description="Helical; Name=8" evidence="13 14 16 41 42 43 44 45 46 47 48 49 50 51 52">
    <location>
        <begin position="305"/>
        <end position="327"/>
    </location>
</feature>
<feature type="topological domain" description="Cytoplasmic" evidence="13 14 16 41 42 43 44 45 46 47 48 49 50 51 52">
    <location>
        <begin position="328"/>
        <end position="333"/>
    </location>
</feature>
<feature type="transmembrane region" description="Helical; Name=9" evidence="13 14 16 41 42 43 44 45 46 47 48 49 50 51 52">
    <location>
        <begin position="334"/>
        <end position="354"/>
    </location>
</feature>
<feature type="topological domain" description="Extracellular" evidence="13 14 16 41 42 43 44 45 46 47 48 49 50 51 52">
    <location>
        <begin position="355"/>
        <end position="360"/>
    </location>
</feature>
<feature type="transmembrane region" description="Helical; Name=10" evidence="13 14 16 41 42 43 44 45 46 47 48 49 50 51 52">
    <location>
        <begin position="361"/>
        <end position="384"/>
    </location>
</feature>
<feature type="topological domain" description="Cytoplasmic" evidence="13 14 16 41 42 43 44 45 46 47 48 49 50 51 52">
    <location>
        <begin position="385"/>
        <end position="398"/>
    </location>
</feature>
<feature type="transmembrane region" description="Helical; Name=11" evidence="13 14 16 41 42 43 44 45 46 47 48 49 50 51 52">
    <location>
        <begin position="399"/>
        <end position="422"/>
    </location>
</feature>
<feature type="topological domain" description="Extracellular" evidence="13 14 16 41 42 43 44 45 46 47 48 49 50 51 52">
    <location>
        <begin position="423"/>
        <end position="430"/>
    </location>
</feature>
<feature type="transmembrane region" description="Helical; Name=12" evidence="13 14 16 41 42 43 44 45 46 47 48 49 50 51 52">
    <location>
        <begin position="431"/>
        <end position="455"/>
    </location>
</feature>
<feature type="topological domain" description="Cytoplasmic" evidence="13 14 16 41 42 43 44 45 46 47 48 49 50 51 52">
    <location>
        <begin position="456"/>
        <end position="591"/>
    </location>
</feature>
<feature type="region of interest" description="Required for substrate-binding" evidence="8">
    <location>
        <begin position="407"/>
        <end position="419"/>
    </location>
</feature>
<feature type="binding site" evidence="13 16 48 51">
    <location>
        <position position="48"/>
    </location>
    <ligand>
        <name>folate</name>
        <dbReference type="ChEBI" id="CHEBI:62501"/>
    </ligand>
</feature>
<feature type="binding site" evidence="13 16 48 51">
    <location>
        <position position="49"/>
    </location>
    <ligand>
        <name>folate</name>
        <dbReference type="ChEBI" id="CHEBI:62501"/>
    </ligand>
</feature>
<feature type="binding site" evidence="13 16 48 51">
    <location>
        <position position="123"/>
    </location>
    <ligand>
        <name>folate</name>
        <dbReference type="ChEBI" id="CHEBI:62501"/>
    </ligand>
</feature>
<feature type="binding site" evidence="14 46">
    <location>
        <position position="133"/>
    </location>
    <ligand>
        <name>2',3'-cGAMP</name>
        <dbReference type="ChEBI" id="CHEBI:143093"/>
    </ligand>
</feature>
<feature type="binding site" evidence="13 16 48 51">
    <location>
        <position position="133"/>
    </location>
    <ligand>
        <name>folate</name>
        <dbReference type="ChEBI" id="CHEBI:62501"/>
    </ligand>
</feature>
<feature type="binding site" evidence="14 46">
    <location>
        <position position="134"/>
    </location>
    <ligand>
        <name>2',3'-cGAMP</name>
        <dbReference type="ChEBI" id="CHEBI:143093"/>
    </ligand>
</feature>
<feature type="binding site" evidence="14 46">
    <location>
        <position position="137"/>
    </location>
    <ligand>
        <name>2',3'-cGAMP</name>
        <dbReference type="ChEBI" id="CHEBI:143093"/>
    </ligand>
</feature>
<feature type="binding site" evidence="14 46">
    <location>
        <position position="149"/>
    </location>
    <ligand>
        <name>2',3'-cGAMP</name>
        <dbReference type="ChEBI" id="CHEBI:143093"/>
    </ligand>
</feature>
<feature type="binding site" evidence="14 46">
    <location>
        <position position="157"/>
    </location>
    <ligand>
        <name>2',3'-cGAMP</name>
        <dbReference type="ChEBI" id="CHEBI:143093"/>
    </ligand>
</feature>
<feature type="binding site" evidence="13 16 48 51">
    <location>
        <position position="164"/>
    </location>
    <ligand>
        <name>folate</name>
        <dbReference type="ChEBI" id="CHEBI:62501"/>
    </ligand>
</feature>
<feature type="binding site" evidence="13 16 48 51">
    <location>
        <position position="281"/>
    </location>
    <ligand>
        <name>folate</name>
        <dbReference type="ChEBI" id="CHEBI:62501"/>
    </ligand>
</feature>
<feature type="binding site" evidence="14 46">
    <location>
        <position position="282"/>
    </location>
    <ligand>
        <name>2',3'-cGAMP</name>
        <dbReference type="ChEBI" id="CHEBI:143093"/>
    </ligand>
</feature>
<feature type="binding site" evidence="13 16 48 51">
    <location>
        <position position="282"/>
    </location>
    <ligand>
        <name>folate</name>
        <dbReference type="ChEBI" id="CHEBI:62501"/>
    </ligand>
</feature>
<feature type="binding site" evidence="13 16 48 51">
    <location>
        <position position="286"/>
    </location>
    <ligand>
        <name>folate</name>
        <dbReference type="ChEBI" id="CHEBI:62501"/>
    </ligand>
</feature>
<feature type="binding site" evidence="14 46">
    <location>
        <position position="321"/>
    </location>
    <ligand>
        <name>2',3'-cGAMP</name>
        <dbReference type="ChEBI" id="CHEBI:143093"/>
    </ligand>
</feature>
<feature type="binding site" evidence="13 16 48 51">
    <location>
        <position position="373"/>
    </location>
    <ligand>
        <name>folate</name>
        <dbReference type="ChEBI" id="CHEBI:62501"/>
    </ligand>
</feature>
<feature type="binding site" evidence="14 46">
    <location>
        <position position="377"/>
    </location>
    <ligand>
        <name>2',3'-cGAMP</name>
        <dbReference type="ChEBI" id="CHEBI:143093"/>
    </ligand>
</feature>
<feature type="binding site" evidence="13 16 48 51">
    <location>
        <position position="377"/>
    </location>
    <ligand>
        <name>folate</name>
        <dbReference type="ChEBI" id="CHEBI:62501"/>
    </ligand>
</feature>
<feature type="binding site" evidence="14 46">
    <location>
        <position position="381"/>
    </location>
    <ligand>
        <name>2',3'-cGAMP</name>
        <dbReference type="ChEBI" id="CHEBI:143093"/>
    </ligand>
</feature>
<feature type="binding site" evidence="14 46">
    <location>
        <position position="384"/>
    </location>
    <ligand>
        <name>2',3'-cGAMP</name>
        <dbReference type="ChEBI" id="CHEBI:143093"/>
    </ligand>
</feature>
<feature type="binding site" evidence="14 46">
    <location>
        <position position="393"/>
    </location>
    <ligand>
        <name>2',3'-cGAMP</name>
        <dbReference type="ChEBI" id="CHEBI:143093"/>
    </ligand>
</feature>
<feature type="binding site" evidence="14 46">
    <location>
        <position position="396"/>
    </location>
    <ligand>
        <name>2',3'-cGAMP</name>
        <dbReference type="ChEBI" id="CHEBI:143093"/>
    </ligand>
</feature>
<feature type="binding site" evidence="14 46">
    <location>
        <position position="400"/>
    </location>
    <ligand>
        <name>2',3'-cGAMP</name>
        <dbReference type="ChEBI" id="CHEBI:143093"/>
    </ligand>
</feature>
<feature type="modified residue" description="N-acetylmethionine" evidence="54">
    <location>
        <position position="1"/>
    </location>
</feature>
<feature type="modified residue" description="Phosphoserine" evidence="55">
    <location>
        <position position="5"/>
    </location>
</feature>
<feature type="modified residue" description="Phosphoserine" evidence="55">
    <location>
        <position position="225"/>
    </location>
</feature>
<feature type="modified residue" description="Phosphoserine" evidence="1">
    <location>
        <position position="474"/>
    </location>
</feature>
<feature type="modified residue" description="Phosphoserine" evidence="1">
    <location>
        <position position="485"/>
    </location>
</feature>
<feature type="modified residue" description="Phosphoserine" evidence="53">
    <location>
        <position position="499"/>
    </location>
</feature>
<feature type="modified residue" description="Phosphoserine" evidence="53">
    <location>
        <position position="503"/>
    </location>
</feature>
<feature type="glycosylation site" description="N-linked (GlcNAc...) asparagine" evidence="2 23">
    <location>
        <position position="58"/>
    </location>
</feature>
<feature type="splice variant" id="VSP_042891" description="In isoform 2." evidence="25">
    <original>MVPSSPAVEKQVPVEPGPDPELRSWRHLVCYLCFYGFMAQIRPGESFITPYLLGPDKNFTREQ</original>
    <variation>MRPQPAEPAPGGRGNEACSIHSE</variation>
    <location>
        <begin position="1"/>
        <end position="63"/>
    </location>
</feature>
<feature type="splice variant" id="VSP_044497" description="In isoform 3." evidence="26">
    <original>FQLYSVYFLILSIIYFLGAMLDGLRHCQRGHHPRQPPAQGLRSAAEEKAAQALSVQDKGLGGLQPAQSPPLSPEDSLGAVGPASLEQRQSDPYLAQAPAPQAAEFLSPVTTPSPCTLCSAQASGPEAADETCPQLAVHPPGVSKLGLQCLPSDGVQNVNQ</original>
    <variation>NEELHVASLSLWKSHLRLAADTLSSEGSSGSGPRSWFLSPTLRAALHGPVCPSEVCPS</variation>
    <location>
        <begin position="432"/>
        <end position="591"/>
    </location>
</feature>
<feature type="sequence variant" id="VAR_020210" description="In dbSNP:rs1051266." evidence="7 18 19 20 22">
    <original>H</original>
    <variation>R</variation>
    <location>
        <position position="27"/>
    </location>
</feature>
<feature type="sequence variant" id="VAR_085516" description="In MEGAF; loss of cellular uptake of folates, including methotrexate; dbSNP:rs757838708." evidence="12">
    <location>
        <position position="212"/>
    </location>
</feature>
<feature type="sequence variant" id="VAR_089164" description="In IMD114; likely pathogenic; decreased function in positive regulation of cGAS/STING signaling pathway and altered activation of immune response; no effect on localization to the cell membrane." evidence="15 17">
    <original>G</original>
    <variation>R</variation>
    <location>
        <position position="348"/>
    </location>
</feature>
<feature type="sequence variant" id="VAR_052404" description="In dbSNP:rs35786590.">
    <original>A</original>
    <variation>V</variation>
    <location>
        <position position="558"/>
    </location>
</feature>
<feature type="mutagenesis site" description="Reduces methotrexate uptake." evidence="13">
    <original>R</original>
    <variation>A</variation>
    <location>
        <position position="42"/>
    </location>
</feature>
<feature type="mutagenesis site" description="Reduces methotrexate uptake. Reduces methotrexate uptake; when associated with K-45." evidence="13">
    <original>R</original>
    <variation>E</variation>
    <location>
        <position position="42"/>
    </location>
</feature>
<feature type="mutagenesis site" description="Enhances methotrexate uptake." evidence="13">
    <original>R</original>
    <variation>K</variation>
    <location>
        <position position="42"/>
    </location>
</feature>
<feature type="mutagenesis site" description="Enhances methotrexate uptake." evidence="13 16">
    <original>E</original>
    <variation>A</variation>
    <location>
        <position position="45"/>
    </location>
</feature>
<feature type="mutagenesis site" description="Reduces methotrexate uptake. Reduces methotrexate uptake; when associated with E-42." evidence="13">
    <original>E</original>
    <variation>K</variation>
    <location>
        <position position="45"/>
    </location>
</feature>
<feature type="mutagenesis site" description="Reduces methotrexate uptake. Reduces methotrexate uptake; when associated with A-126 and A-286." evidence="13">
    <original>I</original>
    <variation>A</variation>
    <location>
        <position position="48"/>
    </location>
</feature>
<feature type="mutagenesis site" description="No effect on methotrexate uptake but shifts selectivity towards folinate and pemetrexed." evidence="13">
    <original>I</original>
    <variation>F</variation>
    <location>
        <position position="48"/>
    </location>
</feature>
<feature type="mutagenesis site" description="Reduces methotrexate uptake. Reduces the expression of IFNB1 and CXCL10 upon cGAMP stimulation." evidence="14 16">
    <original>T</original>
    <variation>A</variation>
    <location>
        <position position="49"/>
    </location>
</feature>
<feature type="mutagenesis site" description="Completely abolishes N-glycosylation without affecting subcellular location or folate:anion antiporter activity." evidence="23">
    <original>N</original>
    <variation>Q</variation>
    <location>
        <position position="58"/>
    </location>
</feature>
<feature type="mutagenesis site" description="Reduces methotrexate uptake." evidence="16">
    <original>I</original>
    <variation>A</variation>
    <location>
        <position position="68"/>
    </location>
</feature>
<feature type="mutagenesis site" description="Reduces methotrexate uptake." evidence="14 16">
    <original>T</original>
    <variation>A</variation>
    <variation>Y</variation>
    <location>
        <position position="69"/>
    </location>
</feature>
<feature type="mutagenesis site" description="Reduces methotrexate uptake." evidence="16">
    <original>L</original>
    <variation>A</variation>
    <variation>W</variation>
    <location>
        <position position="72"/>
    </location>
</feature>
<feature type="mutagenesis site" description="Reduces methotrexate uptake." evidence="13">
    <original>Y</original>
    <variation>A</variation>
    <location>
        <position position="76"/>
    </location>
</feature>
<feature type="mutagenesis site" description="Reduces methotrexate uptake." evidence="13 14 16">
    <original>E</original>
    <variation>A</variation>
    <variation>D</variation>
    <location>
        <position position="123"/>
    </location>
</feature>
<feature type="mutagenesis site" description="Reduces methotrexate uptake. Reduces methotrexate uptake; when associated with A-48 and A-286." evidence="13 16">
    <original>Y</original>
    <variation>A</variation>
    <location>
        <position position="126"/>
    </location>
</feature>
<feature type="mutagenesis site" description="Reduces methotrexate uptake." evidence="16">
    <original>M</original>
    <variation>T</variation>
    <location>
        <position position="130"/>
    </location>
</feature>
<feature type="mutagenesis site" description="Reduces methotrexate uptake. Reduces IRF3 phosphorylation upon cGAMP stimulation." evidence="13 14 16">
    <original>R</original>
    <variation>A</variation>
    <location>
        <position position="133"/>
    </location>
</feature>
<feature type="mutagenesis site" description="Reduces methotrexate uptake." evidence="16">
    <original>R</original>
    <variation>E</variation>
    <location>
        <position position="133"/>
    </location>
</feature>
<feature type="mutagenesis site" description="Reduces methotrexate uptake. Reduces IRF3 phosphorylation upon cGAMP stimulation." evidence="14">
    <original>Y</original>
    <variation>A</variation>
    <location>
        <position position="149"/>
    </location>
</feature>
<feature type="mutagenesis site" description="Reduces methotrexate uptake. Reduces IRF3 phosphorylation upon cGAMP stimulation." evidence="14">
    <original>Q</original>
    <variation>A</variation>
    <location>
        <position position="150"/>
    </location>
</feature>
<feature type="mutagenesis site" description="Reduces IRF3 phosphorylation upon cGAMP stimulation. Reduces methotrexate uptake." evidence="14">
    <original>R</original>
    <variation>A</variation>
    <location>
        <position position="157"/>
    </location>
</feature>
<feature type="mutagenesis site" description="Abolishes methotrexate uptake." evidence="13">
    <original>R</original>
    <variation>K</variation>
    <location>
        <position position="157"/>
    </location>
</feature>
<feature type="mutagenesis site" description="Reduces IRF3 phosphorylation upon cGAMP stimulation." evidence="14">
    <location>
        <begin position="204"/>
        <end position="214"/>
    </location>
</feature>
<feature type="mutagenesis site" description="Reduces methotrexate uptake." evidence="14 16">
    <original>Y</original>
    <variation>A</variation>
    <location>
        <position position="281"/>
    </location>
</feature>
<feature type="mutagenesis site" description="Reduces methotrexate uptake." evidence="16">
    <original>V</original>
    <variation>A</variation>
    <location>
        <position position="285"/>
    </location>
</feature>
<feature type="mutagenesis site" description="Reduces methotrexate uptake. Reduces methotrexate uptake; when associated with A-48 and A-126." evidence="13 16">
    <original>Y</original>
    <variation>A</variation>
    <location>
        <position position="286"/>
    </location>
</feature>
<feature type="mutagenesis site" description="Reduces methotrexate uptake." evidence="16">
    <original>Y</original>
    <variation>N</variation>
    <location>
        <position position="286"/>
    </location>
</feature>
<feature type="mutagenesis site" description="Reduces methotrexate uptake." evidence="13 16">
    <original>H</original>
    <variation>A</variation>
    <location>
        <position position="289"/>
    </location>
</feature>
<feature type="mutagenesis site" description="Reduces methotrexate uptake." evidence="16">
    <original>H</original>
    <variation>Q</variation>
    <location>
        <position position="289"/>
    </location>
</feature>
<feature type="mutagenesis site" description="Abolishes methotrexate uptake." evidence="13">
    <original>D</original>
    <variation>A</variation>
    <location>
        <position position="310"/>
    </location>
</feature>
<feature type="mutagenesis site" description="Reduces IRF3 phosphorylation upon cGAMP stimulation." evidence="14">
    <original>K</original>
    <variation>A</variation>
    <location>
        <position position="328"/>
    </location>
</feature>
<feature type="mutagenesis site" description="Reduces methotrexate uptake." evidence="13 14 16">
    <original>R</original>
    <variation>A</variation>
    <location>
        <position position="373"/>
    </location>
</feature>
<feature type="mutagenesis site" description="Reduces IRF3 phosphorylation upon cGAMP stimulation." evidence="14">
    <original>Y</original>
    <variation>A</variation>
    <location>
        <position position="376"/>
    </location>
</feature>
<feature type="mutagenesis site" description="Reduces methotrexate uptake. Reduces IRF3 phosphorylation upon cGAMP stimulation." evidence="14 16">
    <original>Q</original>
    <variation>A</variation>
    <location>
        <position position="377"/>
    </location>
</feature>
<feature type="mutagenesis site" description="Reduces methotrexate uptake." evidence="16">
    <original>Q</original>
    <variation>M</variation>
    <location>
        <position position="377"/>
    </location>
</feature>
<feature type="mutagenesis site" description="Reduces methotrexate uptake. Reduces IRF3 phosphorylation upon cGAMP stimulation." evidence="14">
    <original>T</original>
    <variation>A</variation>
    <location>
        <position position="384"/>
    </location>
</feature>
<feature type="mutagenesis site" description="Reduces methotrexate uptake. Reduces IRF3 phosphorylation upon cGAMP stimulation." evidence="14">
    <original>K</original>
    <variation>A</variation>
    <location>
        <position position="393"/>
    </location>
</feature>
<feature type="mutagenesis site" description="Reduces methotrexate uptake. Reduces IRF3 phosphorylation upon cGAMP stimulation." evidence="14">
    <original>C</original>
    <variation>A</variation>
    <location>
        <position position="396"/>
    </location>
</feature>
<feature type="mutagenesis site" description="Reduces methotrexate uptake. Reduces IRF3 phosphorylation upon cGAMP stimulation." evidence="14">
    <original>F</original>
    <variation>A</variation>
    <location>
        <position position="400"/>
    </location>
</feature>
<feature type="mutagenesis site" description="Abolishes methotrexate uptake." evidence="13">
    <original>K</original>
    <variation>A</variation>
    <location>
        <position position="411"/>
    </location>
</feature>
<feature type="sequence conflict" description="In Ref. 1; AAA98442." evidence="34" ref="1">
    <original>R</original>
    <variation>P</variation>
    <location>
        <position position="268"/>
    </location>
</feature>
<feature type="sequence conflict" description="In Ref. 4; AAB35058." evidence="34" ref="4">
    <original>H</original>
    <variation>D</variation>
    <location>
        <position position="457"/>
    </location>
</feature>
<feature type="sequence conflict" description="In Ref. 4; AAB35058." evidence="34" ref="4">
    <original>A</original>
    <variation>R</variation>
    <location>
        <position position="483"/>
    </location>
</feature>
<feature type="helix" evidence="57">
    <location>
        <begin position="20"/>
        <end position="26"/>
    </location>
</feature>
<feature type="helix" evidence="58">
    <location>
        <begin position="29"/>
        <end position="37"/>
    </location>
</feature>
<feature type="strand" evidence="58">
    <location>
        <begin position="45"/>
        <end position="47"/>
    </location>
</feature>
<feature type="helix" evidence="58">
    <location>
        <begin position="48"/>
        <end position="52"/>
    </location>
</feature>
<feature type="turn" evidence="58">
    <location>
        <begin position="55"/>
        <end position="57"/>
    </location>
</feature>
<feature type="helix" evidence="58">
    <location>
        <begin position="61"/>
        <end position="68"/>
    </location>
</feature>
<feature type="helix" evidence="58">
    <location>
        <begin position="70"/>
        <end position="90"/>
    </location>
</feature>
<feature type="helix" evidence="58">
    <location>
        <begin position="92"/>
        <end position="111"/>
    </location>
</feature>
<feature type="helix" evidence="58">
    <location>
        <begin position="116"/>
        <end position="132"/>
    </location>
</feature>
<feature type="helix" evidence="58">
    <location>
        <begin position="136"/>
        <end position="143"/>
    </location>
</feature>
<feature type="helix" evidence="56">
    <location>
        <begin position="146"/>
        <end position="148"/>
    </location>
</feature>
<feature type="helix" evidence="58">
    <location>
        <begin position="149"/>
        <end position="175"/>
    </location>
</feature>
<feature type="helix" evidence="58">
    <location>
        <begin position="182"/>
        <end position="199"/>
    </location>
</feature>
<feature type="strand" evidence="56">
    <location>
        <begin position="201"/>
        <end position="203"/>
    </location>
</feature>
<feature type="strand" evidence="57">
    <location>
        <begin position="210"/>
        <end position="213"/>
    </location>
</feature>
<feature type="helix" evidence="58">
    <location>
        <begin position="253"/>
        <end position="262"/>
    </location>
</feature>
<feature type="helix" evidence="58">
    <location>
        <begin position="267"/>
        <end position="287"/>
    </location>
</feature>
<feature type="helix" evidence="58">
    <location>
        <begin position="291"/>
        <end position="295"/>
    </location>
</feature>
<feature type="strand" evidence="57">
    <location>
        <begin position="301"/>
        <end position="303"/>
    </location>
</feature>
<feature type="helix" evidence="58">
    <location>
        <begin position="306"/>
        <end position="323"/>
    </location>
</feature>
<feature type="helix" evidence="60">
    <location>
        <begin position="324"/>
        <end position="326"/>
    </location>
</feature>
<feature type="strand" evidence="58">
    <location>
        <begin position="329"/>
        <end position="331"/>
    </location>
</feature>
<feature type="strand" evidence="59">
    <location>
        <begin position="332"/>
        <end position="334"/>
    </location>
</feature>
<feature type="helix" evidence="58">
    <location>
        <begin position="337"/>
        <end position="354"/>
    </location>
</feature>
<feature type="helix" evidence="57">
    <location>
        <begin position="359"/>
        <end position="361"/>
    </location>
</feature>
<feature type="helix" evidence="58">
    <location>
        <begin position="362"/>
        <end position="387"/>
    </location>
</feature>
<feature type="strand" evidence="58">
    <location>
        <begin position="388"/>
        <end position="390"/>
    </location>
</feature>
<feature type="helix" evidence="58">
    <location>
        <begin position="393"/>
        <end position="418"/>
    </location>
</feature>
<feature type="turn" evidence="58">
    <location>
        <begin position="421"/>
        <end position="424"/>
    </location>
</feature>
<feature type="helix" evidence="58">
    <location>
        <begin position="428"/>
        <end position="452"/>
    </location>
</feature>
<accession>P41440</accession>
<accession>B2R7U8</accession>
<accession>B7Z8C3</accession>
<accession>E9PFY4</accession>
<accession>O00553</accession>
<accession>O60227</accession>
<accession>Q13026</accession>
<accession>Q9BTX8</accession>
<reference key="1">
    <citation type="journal article" date="1995" name="Biochem. Biophys. Res. Commun.">
        <title>Molecular cloning of the human placental folate transporter.</title>
        <authorList>
            <person name="Prasad P.D."/>
            <person name="Ramamoorthy S."/>
            <person name="Leibach F.H."/>
            <person name="Ganapathy V."/>
        </authorList>
    </citation>
    <scope>NUCLEOTIDE SEQUENCE [MRNA] (ISOFORM 1)</scope>
    <scope>FUNCTION</scope>
    <scope>TISSUE SPECIFICITY</scope>
    <scope>VARIANT ARG-27</scope>
    <source>
        <tissue>Placenta</tissue>
    </source>
</reference>
<reference key="2">
    <citation type="submission" date="1996-04" db="EMBL/GenBank/DDBJ databases">
        <authorList>
            <person name="Prasad P.D."/>
        </authorList>
    </citation>
    <scope>SEQUENCE REVISION TO 490-527</scope>
</reference>
<reference key="3">
    <citation type="journal article" date="1995" name="J. Biol. Chem.">
        <title>Isolation of human cDNAs that restore methotrexate sensitivity and reduced folate carrier activity in methotrexate transport-defective Chinese hamster ovary cells.</title>
        <authorList>
            <person name="Wong S.C."/>
            <person name="Proefke A."/>
            <person name="Bhushan A."/>
            <person name="Matherly L.H."/>
        </authorList>
    </citation>
    <scope>NUCLEOTIDE SEQUENCE [MRNA] (ISOFORM 1)</scope>
    <scope>FUNCTION</scope>
    <scope>VARIANT ARG-27</scope>
</reference>
<reference key="4">
    <citation type="journal article" date="1995" name="Cancer Res.">
        <title>Isolation of a gene encoding a human reduced folate carrier (RFC1) and analysis of its expression in transport-deficient, methotrexate-resistant human breast cancer cells.</title>
        <authorList>
            <person name="Moscow J.A."/>
            <person name="Gong M."/>
            <person name="He R."/>
            <person name="Sgagias M.K."/>
            <person name="Dixon K.H."/>
            <person name="Anzick S.L."/>
            <person name="Meltzer P.S."/>
            <person name="Cowan K.H."/>
        </authorList>
    </citation>
    <scope>NUCLEOTIDE SEQUENCE [MRNA] (ISOFORM 1)</scope>
    <scope>FUNCTION</scope>
    <scope>VARIANT ARG-27</scope>
    <source>
        <tissue>Testis</tissue>
    </source>
</reference>
<reference key="5">
    <citation type="journal article" date="1995" name="J. Biol. Chem.">
        <title>Isolation of a human cDNA that complements a mutant hamster cell defective in methotrexate uptake.</title>
        <authorList>
            <person name="Williams F.M."/>
            <person name="Flintoff W.F."/>
        </authorList>
    </citation>
    <scope>NUCLEOTIDE SEQUENCE [MRNA] (ISOFORM 1)</scope>
    <source>
        <tissue>Lymphoma</tissue>
    </source>
</reference>
<reference key="6">
    <citation type="journal article" date="1998" name="Gene">
        <title>Structural analysis of the human RFC-1 gene encoding a folate transporter reveals multiple promoters and alternatively spliced transcripts with 5' end heterogeneity.</title>
        <authorList>
            <person name="Tolner B."/>
            <person name="Roy K."/>
            <person name="Sirotnak F.M."/>
        </authorList>
    </citation>
    <scope>NUCLEOTIDE SEQUENCE [GENOMIC DNA]</scope>
    <scope>VARIANT ARG-27</scope>
    <source>
        <tissue>Liver</tissue>
    </source>
</reference>
<reference key="7">
    <citation type="journal article" date="1997" name="Gastroenterology">
        <title>Human intestinal folate transport: cloning, expression, and distribution of complementary RNA.</title>
        <authorList>
            <person name="Nguyen T.T."/>
            <person name="Dyer D.L."/>
            <person name="Dunning D.D."/>
            <person name="Rubin S.A."/>
            <person name="Grant K.E."/>
            <person name="Said H.M."/>
        </authorList>
    </citation>
    <scope>NUCLEOTIDE SEQUENCE [MRNA] (ISOFORM 1)</scope>
    <scope>FUNCTION</scope>
    <source>
        <tissue>Small intestine</tissue>
    </source>
</reference>
<reference key="8">
    <citation type="journal article" date="2004" name="Nat. Genet.">
        <title>Complete sequencing and characterization of 21,243 full-length human cDNAs.</title>
        <authorList>
            <person name="Ota T."/>
            <person name="Suzuki Y."/>
            <person name="Nishikawa T."/>
            <person name="Otsuki T."/>
            <person name="Sugiyama T."/>
            <person name="Irie R."/>
            <person name="Wakamatsu A."/>
            <person name="Hayashi K."/>
            <person name="Sato H."/>
            <person name="Nagai K."/>
            <person name="Kimura K."/>
            <person name="Makita H."/>
            <person name="Sekine M."/>
            <person name="Obayashi M."/>
            <person name="Nishi T."/>
            <person name="Shibahara T."/>
            <person name="Tanaka T."/>
            <person name="Ishii S."/>
            <person name="Yamamoto J."/>
            <person name="Saito K."/>
            <person name="Kawai Y."/>
            <person name="Isono Y."/>
            <person name="Nakamura Y."/>
            <person name="Nagahari K."/>
            <person name="Murakami K."/>
            <person name="Yasuda T."/>
            <person name="Iwayanagi T."/>
            <person name="Wagatsuma M."/>
            <person name="Shiratori A."/>
            <person name="Sudo H."/>
            <person name="Hosoiri T."/>
            <person name="Kaku Y."/>
            <person name="Kodaira H."/>
            <person name="Kondo H."/>
            <person name="Sugawara M."/>
            <person name="Takahashi M."/>
            <person name="Kanda K."/>
            <person name="Yokoi T."/>
            <person name="Furuya T."/>
            <person name="Kikkawa E."/>
            <person name="Omura Y."/>
            <person name="Abe K."/>
            <person name="Kamihara K."/>
            <person name="Katsuta N."/>
            <person name="Sato K."/>
            <person name="Tanikawa M."/>
            <person name="Yamazaki M."/>
            <person name="Ninomiya K."/>
            <person name="Ishibashi T."/>
            <person name="Yamashita H."/>
            <person name="Murakawa K."/>
            <person name="Fujimori K."/>
            <person name="Tanai H."/>
            <person name="Kimata M."/>
            <person name="Watanabe M."/>
            <person name="Hiraoka S."/>
            <person name="Chiba Y."/>
            <person name="Ishida S."/>
            <person name="Ono Y."/>
            <person name="Takiguchi S."/>
            <person name="Watanabe S."/>
            <person name="Yosida M."/>
            <person name="Hotuta T."/>
            <person name="Kusano J."/>
            <person name="Kanehori K."/>
            <person name="Takahashi-Fujii A."/>
            <person name="Hara H."/>
            <person name="Tanase T.-O."/>
            <person name="Nomura Y."/>
            <person name="Togiya S."/>
            <person name="Komai F."/>
            <person name="Hara R."/>
            <person name="Takeuchi K."/>
            <person name="Arita M."/>
            <person name="Imose N."/>
            <person name="Musashino K."/>
            <person name="Yuuki H."/>
            <person name="Oshima A."/>
            <person name="Sasaki N."/>
            <person name="Aotsuka S."/>
            <person name="Yoshikawa Y."/>
            <person name="Matsunawa H."/>
            <person name="Ichihara T."/>
            <person name="Shiohata N."/>
            <person name="Sano S."/>
            <person name="Moriya S."/>
            <person name="Momiyama H."/>
            <person name="Satoh N."/>
            <person name="Takami S."/>
            <person name="Terashima Y."/>
            <person name="Suzuki O."/>
            <person name="Nakagawa S."/>
            <person name="Senoh A."/>
            <person name="Mizoguchi H."/>
            <person name="Goto Y."/>
            <person name="Shimizu F."/>
            <person name="Wakebe H."/>
            <person name="Hishigaki H."/>
            <person name="Watanabe T."/>
            <person name="Sugiyama A."/>
            <person name="Takemoto M."/>
            <person name="Kawakami B."/>
            <person name="Yamazaki M."/>
            <person name="Watanabe K."/>
            <person name="Kumagai A."/>
            <person name="Itakura S."/>
            <person name="Fukuzumi Y."/>
            <person name="Fujimori Y."/>
            <person name="Komiyama M."/>
            <person name="Tashiro H."/>
            <person name="Tanigami A."/>
            <person name="Fujiwara T."/>
            <person name="Ono T."/>
            <person name="Yamada K."/>
            <person name="Fujii Y."/>
            <person name="Ozaki K."/>
            <person name="Hirao M."/>
            <person name="Ohmori Y."/>
            <person name="Kawabata A."/>
            <person name="Hikiji T."/>
            <person name="Kobatake N."/>
            <person name="Inagaki H."/>
            <person name="Ikema Y."/>
            <person name="Okamoto S."/>
            <person name="Okitani R."/>
            <person name="Kawakami T."/>
            <person name="Noguchi S."/>
            <person name="Itoh T."/>
            <person name="Shigeta K."/>
            <person name="Senba T."/>
            <person name="Matsumura K."/>
            <person name="Nakajima Y."/>
            <person name="Mizuno T."/>
            <person name="Morinaga M."/>
            <person name="Sasaki M."/>
            <person name="Togashi T."/>
            <person name="Oyama M."/>
            <person name="Hata H."/>
            <person name="Watanabe M."/>
            <person name="Komatsu T."/>
            <person name="Mizushima-Sugano J."/>
            <person name="Satoh T."/>
            <person name="Shirai Y."/>
            <person name="Takahashi Y."/>
            <person name="Nakagawa K."/>
            <person name="Okumura K."/>
            <person name="Nagase T."/>
            <person name="Nomura N."/>
            <person name="Kikuchi H."/>
            <person name="Masuho Y."/>
            <person name="Yamashita R."/>
            <person name="Nakai K."/>
            <person name="Yada T."/>
            <person name="Nakamura Y."/>
            <person name="Ohara O."/>
            <person name="Isogai T."/>
            <person name="Sugano S."/>
        </authorList>
    </citation>
    <scope>NUCLEOTIDE SEQUENCE [LARGE SCALE MRNA] (ISOFORMS 1 AND 2)</scope>
    <source>
        <tissue>Thymus</tissue>
        <tissue>Tongue</tissue>
    </source>
</reference>
<reference key="9">
    <citation type="journal article" date="2000" name="Nature">
        <title>The DNA sequence of human chromosome 21.</title>
        <authorList>
            <person name="Hattori M."/>
            <person name="Fujiyama A."/>
            <person name="Taylor T.D."/>
            <person name="Watanabe H."/>
            <person name="Yada T."/>
            <person name="Park H.-S."/>
            <person name="Toyoda A."/>
            <person name="Ishii K."/>
            <person name="Totoki Y."/>
            <person name="Choi D.-K."/>
            <person name="Groner Y."/>
            <person name="Soeda E."/>
            <person name="Ohki M."/>
            <person name="Takagi T."/>
            <person name="Sakaki Y."/>
            <person name="Taudien S."/>
            <person name="Blechschmidt K."/>
            <person name="Polley A."/>
            <person name="Menzel U."/>
            <person name="Delabar J."/>
            <person name="Kumpf K."/>
            <person name="Lehmann R."/>
            <person name="Patterson D."/>
            <person name="Reichwald K."/>
            <person name="Rump A."/>
            <person name="Schillhabel M."/>
            <person name="Schudy A."/>
            <person name="Zimmermann W."/>
            <person name="Rosenthal A."/>
            <person name="Kudoh J."/>
            <person name="Shibuya K."/>
            <person name="Kawasaki K."/>
            <person name="Asakawa S."/>
            <person name="Shintani A."/>
            <person name="Sasaki T."/>
            <person name="Nagamine K."/>
            <person name="Mitsuyama S."/>
            <person name="Antonarakis S.E."/>
            <person name="Minoshima S."/>
            <person name="Shimizu N."/>
            <person name="Nordsiek G."/>
            <person name="Hornischer K."/>
            <person name="Brandt P."/>
            <person name="Scharfe M."/>
            <person name="Schoen O."/>
            <person name="Desario A."/>
            <person name="Reichelt J."/>
            <person name="Kauer G."/>
            <person name="Bloecker H."/>
            <person name="Ramser J."/>
            <person name="Beck A."/>
            <person name="Klages S."/>
            <person name="Hennig S."/>
            <person name="Riesselmann L."/>
            <person name="Dagand E."/>
            <person name="Wehrmeyer S."/>
            <person name="Borzym K."/>
            <person name="Gardiner K."/>
            <person name="Nizetic D."/>
            <person name="Francis F."/>
            <person name="Lehrach H."/>
            <person name="Reinhardt R."/>
            <person name="Yaspo M.-L."/>
        </authorList>
    </citation>
    <scope>NUCLEOTIDE SEQUENCE [LARGE SCALE GENOMIC DNA]</scope>
</reference>
<reference key="10">
    <citation type="submission" date="2005-09" db="EMBL/GenBank/DDBJ databases">
        <authorList>
            <person name="Mural R.J."/>
            <person name="Istrail S."/>
            <person name="Sutton G.G."/>
            <person name="Florea L."/>
            <person name="Halpern A.L."/>
            <person name="Mobarry C.M."/>
            <person name="Lippert R."/>
            <person name="Walenz B."/>
            <person name="Shatkay H."/>
            <person name="Dew I."/>
            <person name="Miller J.R."/>
            <person name="Flanigan M.J."/>
            <person name="Edwards N.J."/>
            <person name="Bolanos R."/>
            <person name="Fasulo D."/>
            <person name="Halldorsson B.V."/>
            <person name="Hannenhalli S."/>
            <person name="Turner R."/>
            <person name="Yooseph S."/>
            <person name="Lu F."/>
            <person name="Nusskern D.R."/>
            <person name="Shue B.C."/>
            <person name="Zheng X.H."/>
            <person name="Zhong F."/>
            <person name="Delcher A.L."/>
            <person name="Huson D.H."/>
            <person name="Kravitz S.A."/>
            <person name="Mouchard L."/>
            <person name="Reinert K."/>
            <person name="Remington K.A."/>
            <person name="Clark A.G."/>
            <person name="Waterman M.S."/>
            <person name="Eichler E.E."/>
            <person name="Adams M.D."/>
            <person name="Hunkapiller M.W."/>
            <person name="Myers E.W."/>
            <person name="Venter J.C."/>
        </authorList>
    </citation>
    <scope>NUCLEOTIDE SEQUENCE [LARGE SCALE GENOMIC DNA]</scope>
</reference>
<reference key="11">
    <citation type="journal article" date="2004" name="Genome Res.">
        <title>The status, quality, and expansion of the NIH full-length cDNA project: the Mammalian Gene Collection (MGC).</title>
        <authorList>
            <consortium name="The MGC Project Team"/>
        </authorList>
    </citation>
    <scope>NUCLEOTIDE SEQUENCE [LARGE SCALE MRNA] (ISOFORM 3)</scope>
    <scope>VARIANT ARG-27</scope>
    <source>
        <tissue>Brain</tissue>
    </source>
</reference>
<reference key="12">
    <citation type="journal article" date="1998" name="Biochim. Biophys. Acta">
        <title>Effects of the loss of capacity for N-glycosylation on the transport activity and cellular localization of the human reduced folate carrier.</title>
        <authorList>
            <person name="Wong S.C."/>
            <person name="Zhang L."/>
            <person name="Proefke S.A."/>
            <person name="Matherly L.H."/>
        </authorList>
    </citation>
    <scope>FUNCTION</scope>
    <scope>GLYCOSYLATION AT ASN-58</scope>
    <scope>MUTAGENESIS OF ASN-58</scope>
</reference>
<reference key="13">
    <citation type="journal article" date="1999" name="J. Biol. Chem.">
        <title>Topological and functional analysis of the human reduced folate carrier by hemagglutinin epitope insertion.</title>
        <authorList>
            <person name="Ferguson P.L."/>
            <person name="Flintoff W.F."/>
        </authorList>
    </citation>
    <scope>SUBCELLULAR LOCATION</scope>
    <scope>TOPOLOGY</scope>
</reference>
<reference key="14">
    <citation type="journal article" date="2000" name="J. Biol. Chem.">
        <title>Expression and differential polarization of the reduced-folate transporter-1 and the folate receptor alpha in mammalian retinal pigment epithelium.</title>
        <authorList>
            <person name="Chancy C.D."/>
            <person name="Kekuda R."/>
            <person name="Huang W."/>
            <person name="Prasad P.D."/>
            <person name="Kuhnel J.M."/>
            <person name="Sirotnak F.M."/>
            <person name="Roon P."/>
            <person name="Ganapathy V."/>
            <person name="Smith S.B."/>
        </authorList>
    </citation>
    <scope>FUNCTION</scope>
    <scope>SUBCELLULAR LOCATION</scope>
</reference>
<reference key="15">
    <citation type="journal article" date="2003" name="Exp. Eye Res.">
        <title>Regulation of reduced-folate transporter-1 (RFT-1) by homocysteine and identity of transport systems for homocysteine uptake in retinal pigment epithelial (RPE) cells.</title>
        <authorList>
            <person name="Naggar H."/>
            <person name="Fei Y.J."/>
            <person name="Ganapathy V."/>
            <person name="Smith S.B."/>
        </authorList>
    </citation>
    <scope>FUNCTION</scope>
    <scope>TRANSPORTER ACTIVITY</scope>
</reference>
<reference key="16">
    <citation type="journal article" date="2004" name="J. Biol. Chem.">
        <title>Restoration of transport activity by co-expression of human reduced folate carrier half-molecules in transport-impaired K562 cells: localization of a substrate binding domain to transmembrane domains 7-12.</title>
        <authorList>
            <person name="Witt T.L."/>
            <person name="Stapels S.E."/>
            <person name="Matherly L.H."/>
        </authorList>
    </citation>
    <scope>FUNCTION</scope>
    <scope>SUBCELLULAR LOCATION</scope>
</reference>
<reference key="17">
    <citation type="journal article" date="2005" name="J. Biol. Chem.">
        <title>Localization of a substrate binding domain of the human reduced folate carrier to transmembrane domain 11 by radioaffinity labeling and cysteine-substituted accessibility methods.</title>
        <authorList>
            <person name="Hou Z."/>
            <person name="Stapels S.E."/>
            <person name="Haska C.L."/>
            <person name="Matherly L.H."/>
        </authorList>
    </citation>
    <scope>FUNCTION</scope>
    <scope>SUBCELLULAR LOCATION</scope>
</reference>
<reference key="18">
    <citation type="journal article" date="2008" name="Proc. Natl. Acad. Sci. U.S.A.">
        <title>A quantitative atlas of mitotic phosphorylation.</title>
        <authorList>
            <person name="Dephoure N."/>
            <person name="Zhou C."/>
            <person name="Villen J."/>
            <person name="Beausoleil S.A."/>
            <person name="Bakalarski C.E."/>
            <person name="Elledge S.J."/>
            <person name="Gygi S.P."/>
        </authorList>
    </citation>
    <scope>IDENTIFICATION BY MASS SPECTROMETRY [LARGE SCALE ANALYSIS]</scope>
    <source>
        <tissue>Cervix carcinoma</tissue>
    </source>
</reference>
<reference key="19">
    <citation type="journal article" date="2009" name="Anal. Chem.">
        <title>Lys-N and trypsin cover complementary parts of the phosphoproteome in a refined SCX-based approach.</title>
        <authorList>
            <person name="Gauci S."/>
            <person name="Helbig A.O."/>
            <person name="Slijper M."/>
            <person name="Krijgsveld J."/>
            <person name="Heck A.J."/>
            <person name="Mohammed S."/>
        </authorList>
    </citation>
    <scope>IDENTIFICATION BY MASS SPECTROMETRY [LARGE SCALE ANALYSIS]</scope>
</reference>
<reference key="20">
    <citation type="journal article" date="2010" name="Sci. Signal.">
        <title>Quantitative phosphoproteomics reveals widespread full phosphorylation site occupancy during mitosis.</title>
        <authorList>
            <person name="Olsen J.V."/>
            <person name="Vermeulen M."/>
            <person name="Santamaria A."/>
            <person name="Kumar C."/>
            <person name="Miller M.L."/>
            <person name="Jensen L.J."/>
            <person name="Gnad F."/>
            <person name="Cox J."/>
            <person name="Jensen T.S."/>
            <person name="Nigg E.A."/>
            <person name="Brunak S."/>
            <person name="Mann M."/>
        </authorList>
    </citation>
    <scope>PHOSPHORYLATION [LARGE SCALE ANALYSIS] AT SER-499 AND SER-503</scope>
    <scope>IDENTIFICATION BY MASS SPECTROMETRY [LARGE SCALE ANALYSIS]</scope>
    <source>
        <tissue>Cervix carcinoma</tissue>
    </source>
</reference>
<reference key="21">
    <citation type="journal article" date="2012" name="Mol. Pharmacol.">
        <title>Augmentation of reduced folate carrier-mediated folate/antifolate transport through an antiport mechanism with 5-aminoimidazole-4-carboxamide riboside monophosphate.</title>
        <authorList>
            <person name="Visentin M."/>
            <person name="Zhao R."/>
            <person name="Goldman I.D."/>
        </authorList>
    </citation>
    <scope>FUNCTION</scope>
    <scope>TRANSPORTER ACTIVITY</scope>
</reference>
<reference key="22">
    <citation type="journal article" date="2012" name="Proc. Natl. Acad. Sci. U.S.A.">
        <title>N-terminal acetylome analyses and functional insights of the N-terminal acetyltransferase NatB.</title>
        <authorList>
            <person name="Van Damme P."/>
            <person name="Lasa M."/>
            <person name="Polevoda B."/>
            <person name="Gazquez C."/>
            <person name="Elosegui-Artola A."/>
            <person name="Kim D.S."/>
            <person name="De Juan-Pardo E."/>
            <person name="Demeyer K."/>
            <person name="Hole K."/>
            <person name="Larrea E."/>
            <person name="Timmerman E."/>
            <person name="Prieto J."/>
            <person name="Arnesen T."/>
            <person name="Sherman F."/>
            <person name="Gevaert K."/>
            <person name="Aldabe R."/>
        </authorList>
    </citation>
    <scope>ACETYLATION [LARGE SCALE ANALYSIS] AT MET-1</scope>
    <scope>IDENTIFICATION BY MASS SPECTROMETRY [LARGE SCALE ANALYSIS]</scope>
</reference>
<reference key="23">
    <citation type="journal article" date="2013" name="J. Proteome Res.">
        <title>Toward a comprehensive characterization of a human cancer cell phosphoproteome.</title>
        <authorList>
            <person name="Zhou H."/>
            <person name="Di Palma S."/>
            <person name="Preisinger C."/>
            <person name="Peng M."/>
            <person name="Polat A.N."/>
            <person name="Heck A.J."/>
            <person name="Mohammed S."/>
        </authorList>
    </citation>
    <scope>PHOSPHORYLATION [LARGE SCALE ANALYSIS] AT SER-5 AND SER-225</scope>
    <scope>IDENTIFICATION BY MASS SPECTROMETRY [LARGE SCALE ANALYSIS]</scope>
    <source>
        <tissue>Cervix carcinoma</tissue>
        <tissue>Erythroleukemia</tissue>
    </source>
</reference>
<reference key="24">
    <citation type="journal article" date="2019" name="Nature">
        <title>SLC19A1 transports immunoreactive cyclic dinucleotides.</title>
        <authorList>
            <person name="Luteijn R.D."/>
            <person name="Zaver S.A."/>
            <person name="Gowen B.G."/>
            <person name="Wyman S.K."/>
            <person name="Garelis N.E."/>
            <person name="Onia L."/>
            <person name="McWhirter S.M."/>
            <person name="Katibah G.E."/>
            <person name="Corn J.E."/>
            <person name="Woodward J.J."/>
            <person name="Raulet D.H."/>
        </authorList>
    </citation>
    <scope>FUNCTION</scope>
    <scope>TRANSPORTER ACTIVITY</scope>
</reference>
<reference key="25">
    <citation type="journal article" date="2019" name="Mol. Cell">
        <title>SLC19A1 is an importer of the immunotransmitter cGAMP.</title>
        <authorList>
            <person name="Ritchie C."/>
            <person name="Cordova A.F."/>
            <person name="Hess G.T."/>
            <person name="Bassik M.C."/>
            <person name="Li L."/>
        </authorList>
    </citation>
    <scope>FUNCTION</scope>
    <scope>TRANSPORTER ACTIVITY</scope>
</reference>
<reference key="26">
    <citation type="journal article" date="2020" name="Blood">
        <title>A homozygous deletion in the SLC19A1 gene as a cause of folate-dependent recurrent megaloblastic anemia.</title>
        <authorList>
            <person name="Svaton M."/>
            <person name="Skvarova Kramarzova K."/>
            <person name="Kanderova V."/>
            <person name="Mancikova A."/>
            <person name="Smisek P."/>
            <person name="Jesina P."/>
            <person name="Krijt J."/>
            <person name="Stiburkova B."/>
            <person name="Dobrovolny R."/>
            <person name="Sokolova J."/>
            <person name="Bakardjieva-Mihaylova V."/>
            <person name="Vodickova E."/>
            <person name="Rackova M."/>
            <person name="Stuchly J."/>
            <person name="Kalina T."/>
            <person name="Stary J."/>
            <person name="Trka J."/>
            <person name="Fronkova E."/>
            <person name="Kozich V."/>
        </authorList>
    </citation>
    <scope>INVOLVEMENT IN MEGAF</scope>
    <scope>VARIANT MEGAF PHE-212 DEL</scope>
    <scope>CHARACTERIZATION OF VARIANT MEGAF PHE-212 DEL</scope>
    <scope>FUNCTION</scope>
</reference>
<reference evidence="50 51 52" key="27">
    <citation type="journal article" date="2022" name="Cell Discov.">
        <title>Molecular mechanism of substrate recognition by folate transporter SLC19A1.</title>
        <authorList>
            <person name="Dang Y."/>
            <person name="Zhou D."/>
            <person name="Du X."/>
            <person name="Zhao H."/>
            <person name="Lee C.H."/>
            <person name="Yang J."/>
            <person name="Wang Y."/>
            <person name="Qin C."/>
            <person name="Guo Z."/>
            <person name="Zhang Z."/>
        </authorList>
    </citation>
    <scope>STRUCTURE BY ELECTRON MICROSCOPY (3.54 ANGSTROMS) OF 24-591 IN COMPLEX WITH ANTIBODIES</scope>
    <scope>FUNCTION</scope>
    <scope>TRANSPORTER ACTIVITY</scope>
    <scope>SUBCELLULAR LOCATION</scope>
    <scope>TOPOLOGY</scope>
    <scope>MUTAGENESIS OF GLU-45; THR-49; ILE-68; THR-69; LEU-72; GLU-123; TYR-126; MET-130; ARG-133; TYR-281; VAL-285; TYR-286; HIS-289; ARG-373 AND GLN-377</scope>
</reference>
<reference evidence="41 42 47" key="28">
    <citation type="journal article" date="2022" name="Nature">
        <title>Methotrexate recognition by the human reduced folate carrier SLC19A1.</title>
        <authorList>
            <person name="Wright N.J."/>
            <person name="Fedor J.G."/>
            <person name="Zhang H."/>
            <person name="Jeong P."/>
            <person name="Suo Y."/>
            <person name="Yoo J."/>
            <person name="Hong J."/>
            <person name="Im W."/>
            <person name="Lee S.Y."/>
        </authorList>
    </citation>
    <scope>STRUCTURE BY ELECTRON MICROSCOPY (3.30 ANGSTROMS) OF 1-506 ALONE AND IN COMPLEX WITH METHOTREXATE</scope>
    <scope>FUNCTION</scope>
    <scope>TRANSPORTER ACTIVITY</scope>
    <scope>SUBCELLULAR LOCATION</scope>
    <scope>TOPOLOGY</scope>
    <scope>MUTAGENESIS OF ARG-42; GLU-45; ILE-48; TYR-76; GLU-123; TYR-126; ARG-133; ARG-157; TYR-286; HIS-289; ASP-310; ARG-373 AND LYS-411</scope>
</reference>
<reference evidence="43 44 45 46 48 49" key="29">
    <citation type="journal article" date="2022" name="Nature">
        <title>Recognition of cyclic dinucleotides and folates by human SLC19A1.</title>
        <authorList>
            <person name="Zhang Q."/>
            <person name="Zhang X."/>
            <person name="Zhu Y."/>
            <person name="Sun P."/>
            <person name="Zhang L."/>
            <person name="Ma J."/>
            <person name="Zhang Y."/>
            <person name="Zeng L."/>
            <person name="Nie X."/>
            <person name="Gao Y."/>
            <person name="Li Z."/>
            <person name="Liu S."/>
            <person name="Lou J."/>
            <person name="Gao A."/>
            <person name="Zhang L."/>
            <person name="Gao P."/>
        </authorList>
    </citation>
    <scope>STRUCTURE BY ELECTRON MICROSCOPY (3.00 ANGSTROMS) OF 1-506 ALONE AND IN COMPLEXES WITH N5-METHYLTETRAHYDROFOLATE AND CYCLIC DINUCLEOTIDES</scope>
    <scope>FUNCTION</scope>
    <scope>TRANSPORTER ACTIVITY</scope>
    <scope>DOMAIN</scope>
    <scope>SUBCELLULAR LOCATION</scope>
    <scope>TOPOLOGY</scope>
    <scope>MUTAGENESIS OF THR-49; THR-69; GLU-123; ARG-133; TYR-149; GLN-150; ARG-157; 204-LYS--ARG-214; TYR-281; LYS-328; ARG-373; TYR-376; GLN-377; THR-384; LYS-393; CYS-396 AND PHE-400</scope>
</reference>
<reference key="30">
    <citation type="journal article" date="2023" name="Blood">
        <title>Novel immunodeficiency caused by homozygous mutation in solute carrier family 19 member 1, which encodes the reduced folate carrier.</title>
        <authorList>
            <person name="Shiraishi A."/>
            <person name="Uygun V."/>
            <person name="Sharfe N."/>
            <person name="Beldar S."/>
            <person name="Sun M.G.F."/>
            <person name="Dadi H."/>
            <person name="Vong L."/>
            <person name="Maxson M."/>
            <person name="Karaca N.E."/>
            <person name="Mevlitoglu S."/>
            <person name="Grinstein S."/>
            <person name="Artan R."/>
            <person name="Merico D."/>
            <person name="Roifman C.M."/>
        </authorList>
    </citation>
    <scope>VARIANT IMD114 ARG-348</scope>
    <scope>CHARACTERIZATION OF VARIANT IMD114 ARG-348</scope>
    <scope>INVOLVEMENT IN IMD114</scope>
    <scope>SUBCELLULAR LOCATION</scope>
    <scope>FUNCTION</scope>
</reference>
<reference key="31">
    <citation type="journal article" date="2023" name="Genes Immun.">
        <title>Immunodeficiency associated with a novel functionally defective variant of SLC19A1 benefits from folinic acid treatment.</title>
        <authorList>
            <person name="Goek V."/>
            <person name="Erdem S."/>
            <person name="Haliloglu Y."/>
            <person name="Bisgin A."/>
            <person name="Belkaya S."/>
            <person name="Basaran K.E."/>
            <person name="Canatan M.F."/>
            <person name="Oezcan A."/>
            <person name="Yilmaz E."/>
            <person name="Acipayam C."/>
            <person name="Karakuekcue M."/>
            <person name="Canatan H."/>
            <person name="Per H."/>
            <person name="Patiroglu T."/>
            <person name="Eken A."/>
            <person name="Uenal E."/>
        </authorList>
    </citation>
    <scope>VARIANT IMD114 ARG-348</scope>
    <scope>INVOLVEMENT IN IMD114</scope>
</reference>
<evidence type="ECO:0000250" key="1">
    <source>
        <dbReference type="UniProtKB" id="P41438"/>
    </source>
</evidence>
<evidence type="ECO:0000255" key="2"/>
<evidence type="ECO:0000269" key="3">
    <source>
    </source>
</evidence>
<evidence type="ECO:0000269" key="4">
    <source>
    </source>
</evidence>
<evidence type="ECO:0000269" key="5">
    <source>
    </source>
</evidence>
<evidence type="ECO:0000269" key="6">
    <source>
    </source>
</evidence>
<evidence type="ECO:0000269" key="7">
    <source>
    </source>
</evidence>
<evidence type="ECO:0000269" key="8">
    <source>
    </source>
</evidence>
<evidence type="ECO:0000269" key="9">
    <source>
    </source>
</evidence>
<evidence type="ECO:0000269" key="10">
    <source>
    </source>
</evidence>
<evidence type="ECO:0000269" key="11">
    <source>
    </source>
</evidence>
<evidence type="ECO:0000269" key="12">
    <source>
    </source>
</evidence>
<evidence type="ECO:0000269" key="13">
    <source>
    </source>
</evidence>
<evidence type="ECO:0000269" key="14">
    <source>
    </source>
</evidence>
<evidence type="ECO:0000269" key="15">
    <source>
    </source>
</evidence>
<evidence type="ECO:0000269" key="16">
    <source>
    </source>
</evidence>
<evidence type="ECO:0000269" key="17">
    <source>
    </source>
</evidence>
<evidence type="ECO:0000269" key="18">
    <source>
    </source>
</evidence>
<evidence type="ECO:0000269" key="19">
    <source>
    </source>
</evidence>
<evidence type="ECO:0000269" key="20">
    <source>
    </source>
</evidence>
<evidence type="ECO:0000269" key="21">
    <source>
    </source>
</evidence>
<evidence type="ECO:0000269" key="22">
    <source>
    </source>
</evidence>
<evidence type="ECO:0000269" key="23">
    <source>
    </source>
</evidence>
<evidence type="ECO:0000303" key="24">
    <source>
    </source>
</evidence>
<evidence type="ECO:0000303" key="25">
    <source>
    </source>
</evidence>
<evidence type="ECO:0000303" key="26">
    <source>
    </source>
</evidence>
<evidence type="ECO:0000303" key="27">
    <source>
    </source>
</evidence>
<evidence type="ECO:0000303" key="28">
    <source>
    </source>
</evidence>
<evidence type="ECO:0000303" key="29">
    <source>
    </source>
</evidence>
<evidence type="ECO:0000303" key="30">
    <source>
    </source>
</evidence>
<evidence type="ECO:0000303" key="31">
    <source>
    </source>
</evidence>
<evidence type="ECO:0000303" key="32">
    <source>
    </source>
</evidence>
<evidence type="ECO:0000303" key="33">
    <source>
    </source>
</evidence>
<evidence type="ECO:0000305" key="34"/>
<evidence type="ECO:0000305" key="35">
    <source>
    </source>
</evidence>
<evidence type="ECO:0000305" key="36">
    <source>
    </source>
</evidence>
<evidence type="ECO:0000305" key="37">
    <source>
    </source>
</evidence>
<evidence type="ECO:0000305" key="38">
    <source>
    </source>
</evidence>
<evidence type="ECO:0000305" key="39">
    <source>
    </source>
</evidence>
<evidence type="ECO:0000312" key="40">
    <source>
        <dbReference type="HGNC" id="HGNC:10937"/>
    </source>
</evidence>
<evidence type="ECO:0007744" key="41">
    <source>
        <dbReference type="PDB" id="7TX6"/>
    </source>
</evidence>
<evidence type="ECO:0007744" key="42">
    <source>
        <dbReference type="PDB" id="7TX7"/>
    </source>
</evidence>
<evidence type="ECO:0007744" key="43">
    <source>
        <dbReference type="PDB" id="7XPZ"/>
    </source>
</evidence>
<evidence type="ECO:0007744" key="44">
    <source>
        <dbReference type="PDB" id="7XQ0"/>
    </source>
</evidence>
<evidence type="ECO:0007744" key="45">
    <source>
        <dbReference type="PDB" id="7XQ1"/>
    </source>
</evidence>
<evidence type="ECO:0007744" key="46">
    <source>
        <dbReference type="PDB" id="7XQ2"/>
    </source>
</evidence>
<evidence type="ECO:0007744" key="47">
    <source>
        <dbReference type="PDB" id="8DEP"/>
    </source>
</evidence>
<evidence type="ECO:0007744" key="48">
    <source>
        <dbReference type="PDB" id="8GOE"/>
    </source>
</evidence>
<evidence type="ECO:0007744" key="49">
    <source>
        <dbReference type="PDB" id="8GOF"/>
    </source>
</evidence>
<evidence type="ECO:0007744" key="50">
    <source>
        <dbReference type="PDB" id="8HII"/>
    </source>
</evidence>
<evidence type="ECO:0007744" key="51">
    <source>
        <dbReference type="PDB" id="8HIJ"/>
    </source>
</evidence>
<evidence type="ECO:0007744" key="52">
    <source>
        <dbReference type="PDB" id="8HIK"/>
    </source>
</evidence>
<evidence type="ECO:0007744" key="53">
    <source>
    </source>
</evidence>
<evidence type="ECO:0007744" key="54">
    <source>
    </source>
</evidence>
<evidence type="ECO:0007744" key="55">
    <source>
    </source>
</evidence>
<evidence type="ECO:0007829" key="56">
    <source>
        <dbReference type="PDB" id="7TX6"/>
    </source>
</evidence>
<evidence type="ECO:0007829" key="57">
    <source>
        <dbReference type="PDB" id="7XQ0"/>
    </source>
</evidence>
<evidence type="ECO:0007829" key="58">
    <source>
        <dbReference type="PDB" id="7XTK"/>
    </source>
</evidence>
<evidence type="ECO:0007829" key="59">
    <source>
        <dbReference type="PDB" id="8GOE"/>
    </source>
</evidence>
<evidence type="ECO:0007829" key="60">
    <source>
        <dbReference type="PDB" id="8GOF"/>
    </source>
</evidence>
<proteinExistence type="evidence at protein level"/>
<gene>
    <name evidence="40" type="primary">SLC19A1</name>
    <name type="synonym">FLOT1</name>
    <name evidence="31" type="synonym">RFC1</name>
</gene>
<protein>
    <recommendedName>
        <fullName evidence="34">Reduced folate transporter</fullName>
        <shortName evidence="32">FOLT</shortName>
    </recommendedName>
    <alternativeName>
        <fullName evidence="38 39">Cyclic dinucleotide:anion antiporter SLC19A1</fullName>
    </alternativeName>
    <alternativeName>
        <fullName evidence="35 36 37">Folate:anion antiporter SLC19A1</fullName>
    </alternativeName>
    <alternativeName>
        <fullName evidence="33">Intestinal folate carrier 1</fullName>
        <shortName evidence="33">IFC-1</shortName>
    </alternativeName>
    <alternativeName>
        <fullName evidence="32">Placental folate transporter</fullName>
    </alternativeName>
    <alternativeName>
        <fullName evidence="30 31">Reduced folate carrier protein</fullName>
        <shortName evidence="28 31">RFC</shortName>
        <shortName evidence="27 30">hRFC</shortName>
    </alternativeName>
    <alternativeName>
        <fullName evidence="24">Reduced folate transporter 1</fullName>
        <shortName evidence="24">RFT-1</shortName>
    </alternativeName>
    <alternativeName>
        <fullName evidence="34">Solute carrier family 19 member 1</fullName>
        <shortName evidence="29">hSLC19A1</shortName>
    </alternativeName>
</protein>
<name>S19A1_HUMAN</name>
<dbReference type="EMBL" id="U15939">
    <property type="protein sequence ID" value="AAA98442.1"/>
    <property type="molecule type" value="mRNA"/>
</dbReference>
<dbReference type="EMBL" id="U19720">
    <property type="protein sequence ID" value="AAC50180.1"/>
    <property type="molecule type" value="mRNA"/>
</dbReference>
<dbReference type="EMBL" id="S78996">
    <property type="protein sequence ID" value="AAB35058.1"/>
    <property type="molecule type" value="mRNA"/>
</dbReference>
<dbReference type="EMBL" id="U17566">
    <property type="protein sequence ID" value="AAA74914.1"/>
    <property type="molecule type" value="mRNA"/>
</dbReference>
<dbReference type="EMBL" id="U92873">
    <property type="protein sequence ID" value="AAC26162.1"/>
    <property type="molecule type" value="Genomic_DNA"/>
</dbReference>
<dbReference type="EMBL" id="U92869">
    <property type="protein sequence ID" value="AAC26162.1"/>
    <property type="status" value="JOINED"/>
    <property type="molecule type" value="Genomic_DNA"/>
</dbReference>
<dbReference type="EMBL" id="U92870">
    <property type="protein sequence ID" value="AAC26162.1"/>
    <property type="status" value="JOINED"/>
    <property type="molecule type" value="Genomic_DNA"/>
</dbReference>
<dbReference type="EMBL" id="U92871">
    <property type="protein sequence ID" value="AAC26162.1"/>
    <property type="status" value="JOINED"/>
    <property type="molecule type" value="Genomic_DNA"/>
</dbReference>
<dbReference type="EMBL" id="U92872">
    <property type="protein sequence ID" value="AAC26162.1"/>
    <property type="status" value="JOINED"/>
    <property type="molecule type" value="Genomic_DNA"/>
</dbReference>
<dbReference type="EMBL" id="AF004354">
    <property type="protein sequence ID" value="AAB61417.1"/>
    <property type="molecule type" value="mRNA"/>
</dbReference>
<dbReference type="EMBL" id="AK303168">
    <property type="protein sequence ID" value="BAH13909.1"/>
    <property type="molecule type" value="mRNA"/>
</dbReference>
<dbReference type="EMBL" id="AK313125">
    <property type="protein sequence ID" value="BAG35945.1"/>
    <property type="molecule type" value="mRNA"/>
</dbReference>
<dbReference type="EMBL" id="AL163302">
    <property type="protein sequence ID" value="CAB90483.1"/>
    <property type="status" value="ALT_SEQ"/>
    <property type="molecule type" value="Genomic_DNA"/>
</dbReference>
<dbReference type="EMBL" id="BX322561">
    <property type="status" value="NOT_ANNOTATED_CDS"/>
    <property type="molecule type" value="Genomic_DNA"/>
</dbReference>
<dbReference type="EMBL" id="CH471079">
    <property type="protein sequence ID" value="EAX09331.1"/>
    <property type="molecule type" value="Genomic_DNA"/>
</dbReference>
<dbReference type="EMBL" id="BC003068">
    <property type="protein sequence ID" value="AAH03068.1"/>
    <property type="molecule type" value="mRNA"/>
</dbReference>
<dbReference type="CCDS" id="CCDS13725.1">
    <molecule id="P41440-1"/>
</dbReference>
<dbReference type="CCDS" id="CCDS56217.1">
    <molecule id="P41440-2"/>
</dbReference>
<dbReference type="CCDS" id="CCDS56218.1">
    <molecule id="P41440-3"/>
</dbReference>
<dbReference type="PIR" id="I38924">
    <property type="entry name" value="I38924"/>
</dbReference>
<dbReference type="PIR" id="I52728">
    <property type="entry name" value="I52728"/>
</dbReference>
<dbReference type="RefSeq" id="NP_001192135.1">
    <molecule id="P41440-3"/>
    <property type="nucleotide sequence ID" value="NM_001205206.4"/>
</dbReference>
<dbReference type="RefSeq" id="NP_001192136.1">
    <molecule id="P41440-2"/>
    <property type="nucleotide sequence ID" value="NM_001205207.3"/>
</dbReference>
<dbReference type="RefSeq" id="NP_001339440.1">
    <molecule id="P41440-3"/>
    <property type="nucleotide sequence ID" value="NM_001352511.3"/>
</dbReference>
<dbReference type="RefSeq" id="NP_001339441.1">
    <molecule id="P41440-1"/>
    <property type="nucleotide sequence ID" value="NM_001352512.2"/>
</dbReference>
<dbReference type="RefSeq" id="NP_919231.1">
    <molecule id="P41440-1"/>
    <property type="nucleotide sequence ID" value="NM_194255.4"/>
</dbReference>
<dbReference type="RefSeq" id="XP_011528002.1">
    <molecule id="P41440-1"/>
    <property type="nucleotide sequence ID" value="XM_011529700.3"/>
</dbReference>
<dbReference type="RefSeq" id="XP_011528003.1">
    <property type="nucleotide sequence ID" value="XM_011529701.2"/>
</dbReference>
<dbReference type="RefSeq" id="XP_011528004.1">
    <molecule id="P41440-1"/>
    <property type="nucleotide sequence ID" value="XM_011529702.3"/>
</dbReference>
<dbReference type="RefSeq" id="XP_011528005.1">
    <molecule id="P41440-1"/>
    <property type="nucleotide sequence ID" value="XM_011529703.3"/>
</dbReference>
<dbReference type="RefSeq" id="XP_011528006.1">
    <property type="nucleotide sequence ID" value="XM_011529704.2"/>
</dbReference>
<dbReference type="RefSeq" id="XP_016883932.2">
    <molecule id="P41440-1"/>
    <property type="nucleotide sequence ID" value="XM_017028443.2"/>
</dbReference>
<dbReference type="RefSeq" id="XP_016883935.1">
    <property type="nucleotide sequence ID" value="XM_017028446.1"/>
</dbReference>
<dbReference type="RefSeq" id="XP_047296914.1">
    <molecule id="P41440-1"/>
    <property type="nucleotide sequence ID" value="XM_047440958.1"/>
</dbReference>
<dbReference type="RefSeq" id="XP_047296916.1">
    <molecule id="P41440-3"/>
    <property type="nucleotide sequence ID" value="XM_047440960.1"/>
</dbReference>
<dbReference type="RefSeq" id="XP_054189291.1">
    <molecule id="P41440-1"/>
    <property type="nucleotide sequence ID" value="XM_054333316.1"/>
</dbReference>
<dbReference type="RefSeq" id="XP_054189292.1">
    <molecule id="P41440-1"/>
    <property type="nucleotide sequence ID" value="XM_054333317.1"/>
</dbReference>
<dbReference type="RefSeq" id="XP_054189293.1">
    <molecule id="P41440-1"/>
    <property type="nucleotide sequence ID" value="XM_054333318.1"/>
</dbReference>
<dbReference type="RefSeq" id="XP_054189296.1">
    <molecule id="P41440-3"/>
    <property type="nucleotide sequence ID" value="XM_054333321.1"/>
</dbReference>
<dbReference type="RefSeq" id="XP_054189298.1">
    <molecule id="P41440-1"/>
    <property type="nucleotide sequence ID" value="XM_054333323.1"/>
</dbReference>
<dbReference type="PDB" id="7TX6">
    <property type="method" value="EM"/>
    <property type="resolution" value="3.30 A"/>
    <property type="chains" value="A=1-215, A=242-591"/>
</dbReference>
<dbReference type="PDB" id="7TX7">
    <property type="method" value="EM"/>
    <property type="resolution" value="3.80 A"/>
    <property type="chains" value="A=1-215, A=242-591"/>
</dbReference>
<dbReference type="PDB" id="7XPZ">
    <property type="method" value="EM"/>
    <property type="resolution" value="3.40 A"/>
    <property type="chains" value="A=1-506"/>
</dbReference>
<dbReference type="PDB" id="7XQ0">
    <property type="method" value="EM"/>
    <property type="resolution" value="3.00 A"/>
    <property type="chains" value="A=1-506"/>
</dbReference>
<dbReference type="PDB" id="7XQ1">
    <property type="method" value="EM"/>
    <property type="resolution" value="3.40 A"/>
    <property type="chains" value="A=1-506"/>
</dbReference>
<dbReference type="PDB" id="7XQ2">
    <property type="method" value="EM"/>
    <property type="resolution" value="3.30 A"/>
    <property type="chains" value="A=1-506"/>
</dbReference>
<dbReference type="PDB" id="7XTK">
    <property type="method" value="EM"/>
    <property type="resolution" value="2.89 A"/>
    <property type="chains" value="A=1-591"/>
</dbReference>
<dbReference type="PDB" id="8DEP">
    <property type="method" value="EM"/>
    <property type="resolution" value="3.60 A"/>
    <property type="chains" value="A=1-215, A=242-591"/>
</dbReference>
<dbReference type="PDB" id="8GOE">
    <property type="method" value="EM"/>
    <property type="resolution" value="3.00 A"/>
    <property type="chains" value="A=1-506"/>
</dbReference>
<dbReference type="PDB" id="8GOF">
    <property type="method" value="EM"/>
    <property type="resolution" value="3.00 A"/>
    <property type="chains" value="A=1-506"/>
</dbReference>
<dbReference type="PDB" id="8HII">
    <property type="method" value="EM"/>
    <property type="resolution" value="3.57 A"/>
    <property type="chains" value="A=24-591"/>
</dbReference>
<dbReference type="PDB" id="8HIJ">
    <property type="method" value="EM"/>
    <property type="resolution" value="3.54 A"/>
    <property type="chains" value="A=24-591"/>
</dbReference>
<dbReference type="PDB" id="8HIK">
    <property type="method" value="EM"/>
    <property type="resolution" value="3.72 A"/>
    <property type="chains" value="A=24-591"/>
</dbReference>
<dbReference type="PDB" id="9JOZ">
    <property type="method" value="EM"/>
    <property type="resolution" value="2.94 A"/>
    <property type="chains" value="A=24-538"/>
</dbReference>
<dbReference type="PDB" id="9JRI">
    <property type="method" value="EM"/>
    <property type="resolution" value="3.43 A"/>
    <property type="chains" value="A=24-538"/>
</dbReference>
<dbReference type="PDB" id="9JRK">
    <property type="method" value="EM"/>
    <property type="resolution" value="3.44 A"/>
    <property type="chains" value="A=24-538"/>
</dbReference>
<dbReference type="PDB" id="9JRL">
    <property type="method" value="EM"/>
    <property type="resolution" value="3.25 A"/>
    <property type="chains" value="A=24-538"/>
</dbReference>
<dbReference type="PDB" id="9JRM">
    <property type="method" value="EM"/>
    <property type="resolution" value="3.34 A"/>
    <property type="chains" value="A=24-538"/>
</dbReference>
<dbReference type="PDB" id="9JRN">
    <property type="method" value="EM"/>
    <property type="resolution" value="3.74 A"/>
    <property type="chains" value="A=24-538"/>
</dbReference>
<dbReference type="PDBsum" id="7TX6"/>
<dbReference type="PDBsum" id="7TX7"/>
<dbReference type="PDBsum" id="7XPZ"/>
<dbReference type="PDBsum" id="7XQ0"/>
<dbReference type="PDBsum" id="7XQ1"/>
<dbReference type="PDBsum" id="7XQ2"/>
<dbReference type="PDBsum" id="7XTK"/>
<dbReference type="PDBsum" id="8DEP"/>
<dbReference type="PDBsum" id="8GOE"/>
<dbReference type="PDBsum" id="8GOF"/>
<dbReference type="PDBsum" id="8HII"/>
<dbReference type="PDBsum" id="8HIJ"/>
<dbReference type="PDBsum" id="8HIK"/>
<dbReference type="PDBsum" id="9JOZ"/>
<dbReference type="PDBsum" id="9JRI"/>
<dbReference type="PDBsum" id="9JRK"/>
<dbReference type="PDBsum" id="9JRL"/>
<dbReference type="PDBsum" id="9JRM"/>
<dbReference type="PDBsum" id="9JRN"/>
<dbReference type="EMDB" id="EMD-26155"/>
<dbReference type="EMDB" id="EMD-26156"/>
<dbReference type="EMDB" id="EMD-27394"/>
<dbReference type="EMDB" id="EMD-33386"/>
<dbReference type="EMDB" id="EMD-33387"/>
<dbReference type="EMDB" id="EMD-33388"/>
<dbReference type="EMDB" id="EMD-33389"/>
<dbReference type="EMDB" id="EMD-33451"/>
<dbReference type="EMDB" id="EMD-34176"/>
<dbReference type="EMDB" id="EMD-34177"/>
<dbReference type="EMDB" id="EMD-34817"/>
<dbReference type="EMDB" id="EMD-34818"/>
<dbReference type="EMDB" id="EMD-34819"/>
<dbReference type="EMDB" id="EMD-61690"/>
<dbReference type="EMDB" id="EMD-61756"/>
<dbReference type="EMDB" id="EMD-61758"/>
<dbReference type="EMDB" id="EMD-61759"/>
<dbReference type="EMDB" id="EMD-61760"/>
<dbReference type="EMDB" id="EMD-61761"/>
<dbReference type="SMR" id="P41440"/>
<dbReference type="BioGRID" id="112461">
    <property type="interactions" value="82"/>
</dbReference>
<dbReference type="FunCoup" id="P41440">
    <property type="interactions" value="390"/>
</dbReference>
<dbReference type="IntAct" id="P41440">
    <property type="interactions" value="27"/>
</dbReference>
<dbReference type="MINT" id="P41440"/>
<dbReference type="STRING" id="9606.ENSP00000308895"/>
<dbReference type="BindingDB" id="P41440"/>
<dbReference type="ChEMBL" id="CHEMBL4833"/>
<dbReference type="DrugBank" id="DB00158">
    <property type="generic name" value="Folic acid"/>
</dbReference>
<dbReference type="DrugBank" id="DB11256">
    <property type="generic name" value="Levomefolic acid"/>
</dbReference>
<dbReference type="DrugBank" id="DB00563">
    <property type="generic name" value="Methotrexate"/>
</dbReference>
<dbReference type="DrugBank" id="DB00642">
    <property type="generic name" value="Pemetrexed"/>
</dbReference>
<dbReference type="DrugBank" id="DB06813">
    <property type="generic name" value="Pralatrexate"/>
</dbReference>
<dbReference type="DrugBank" id="DB01157">
    <property type="generic name" value="Trimetrexate"/>
</dbReference>
<dbReference type="DrugCentral" id="P41440"/>
<dbReference type="GuidetoPHARMACOLOGY" id="1014"/>
<dbReference type="TCDB" id="2.A.48.1.1">
    <property type="family name" value="the reduced folate carrier (rfc) family"/>
</dbReference>
<dbReference type="GlyCosmos" id="P41440">
    <property type="glycosylation" value="1 site, No reported glycans"/>
</dbReference>
<dbReference type="GlyGen" id="P41440">
    <property type="glycosylation" value="1 site"/>
</dbReference>
<dbReference type="iPTMnet" id="P41440"/>
<dbReference type="PhosphoSitePlus" id="P41440"/>
<dbReference type="SwissPalm" id="P41440"/>
<dbReference type="BioMuta" id="SLC19A1"/>
<dbReference type="DMDM" id="12643280"/>
<dbReference type="jPOST" id="P41440"/>
<dbReference type="MassIVE" id="P41440"/>
<dbReference type="PaxDb" id="9606-ENSP00000308895"/>
<dbReference type="PeptideAtlas" id="P41440"/>
<dbReference type="ProteomicsDB" id="20205"/>
<dbReference type="ProteomicsDB" id="55462">
    <molecule id="P41440-1"/>
</dbReference>
<dbReference type="ProteomicsDB" id="55463">
    <molecule id="P41440-2"/>
</dbReference>
<dbReference type="Pumba" id="P41440"/>
<dbReference type="Antibodypedia" id="10491">
    <property type="antibodies" value="105 antibodies from 21 providers"/>
</dbReference>
<dbReference type="DNASU" id="6573"/>
<dbReference type="Ensembl" id="ENST00000311124.9">
    <molecule id="P41440-1"/>
    <property type="protein sequence ID" value="ENSP00000308895.4"/>
    <property type="gene ID" value="ENSG00000173638.19"/>
</dbReference>
<dbReference type="Ensembl" id="ENST00000380010.8">
    <molecule id="P41440-3"/>
    <property type="protein sequence ID" value="ENSP00000369347.4"/>
    <property type="gene ID" value="ENSG00000173638.19"/>
</dbReference>
<dbReference type="Ensembl" id="ENST00000485649.3">
    <molecule id="P41440-2"/>
    <property type="protein sequence ID" value="ENSP00000441772.1"/>
    <property type="gene ID" value="ENSG00000173638.19"/>
</dbReference>
<dbReference type="Ensembl" id="ENST00000650808.1">
    <molecule id="P41440-3"/>
    <property type="protein sequence ID" value="ENSP00000498221.1"/>
    <property type="gene ID" value="ENSG00000173638.19"/>
</dbReference>
<dbReference type="GeneID" id="6573"/>
<dbReference type="KEGG" id="hsa:6573"/>
<dbReference type="MANE-Select" id="ENST00000311124.9">
    <property type="protein sequence ID" value="ENSP00000308895.4"/>
    <property type="RefSeq nucleotide sequence ID" value="NM_194255.4"/>
    <property type="RefSeq protein sequence ID" value="NP_919231.1"/>
</dbReference>
<dbReference type="UCSC" id="uc002zhl.3">
    <molecule id="P41440-1"/>
    <property type="organism name" value="human"/>
</dbReference>
<dbReference type="AGR" id="HGNC:10937"/>
<dbReference type="CTD" id="6573"/>
<dbReference type="DisGeNET" id="6573"/>
<dbReference type="GeneCards" id="SLC19A1"/>
<dbReference type="HGNC" id="HGNC:10937">
    <property type="gene designation" value="SLC19A1"/>
</dbReference>
<dbReference type="HPA" id="ENSG00000173638">
    <property type="expression patterns" value="Tissue enhanced (choroid)"/>
</dbReference>
<dbReference type="MalaCards" id="SLC19A1"/>
<dbReference type="MIM" id="600424">
    <property type="type" value="gene"/>
</dbReference>
<dbReference type="MIM" id="601775">
    <property type="type" value="phenotype"/>
</dbReference>
<dbReference type="MIM" id="620603">
    <property type="type" value="phenotype"/>
</dbReference>
<dbReference type="neXtProt" id="NX_P41440"/>
<dbReference type="OpenTargets" id="ENSG00000173638"/>
<dbReference type="PharmGKB" id="PA327"/>
<dbReference type="VEuPathDB" id="HostDB:ENSG00000173638"/>
<dbReference type="eggNOG" id="KOG3810">
    <property type="taxonomic scope" value="Eukaryota"/>
</dbReference>
<dbReference type="GeneTree" id="ENSGT00950000183022"/>
<dbReference type="HOGENOM" id="CLU_036909_2_0_1"/>
<dbReference type="InParanoid" id="P41440"/>
<dbReference type="OMA" id="MQFMELF"/>
<dbReference type="OrthoDB" id="18814at2759"/>
<dbReference type="PAN-GO" id="P41440">
    <property type="GO annotations" value="6 GO annotations based on evolutionary models"/>
</dbReference>
<dbReference type="PhylomeDB" id="P41440"/>
<dbReference type="TreeFam" id="TF313684"/>
<dbReference type="PathwayCommons" id="P41440"/>
<dbReference type="Reactome" id="R-HSA-196757">
    <property type="pathway name" value="Metabolism of folate and pterines"/>
</dbReference>
<dbReference type="SignaLink" id="P41440"/>
<dbReference type="SIGNOR" id="P41440"/>
<dbReference type="BioGRID-ORCS" id="6573">
    <property type="hits" value="24 hits in 1172 CRISPR screens"/>
</dbReference>
<dbReference type="ChiTaRS" id="SLC19A1">
    <property type="organism name" value="human"/>
</dbReference>
<dbReference type="GeneWiki" id="SLC19A1"/>
<dbReference type="GenomeRNAi" id="6573"/>
<dbReference type="Pharos" id="P41440">
    <property type="development level" value="Tchem"/>
</dbReference>
<dbReference type="PRO" id="PR:P41440"/>
<dbReference type="Proteomes" id="UP000005640">
    <property type="component" value="Chromosome 21"/>
</dbReference>
<dbReference type="RNAct" id="P41440">
    <property type="molecule type" value="protein"/>
</dbReference>
<dbReference type="Bgee" id="ENSG00000173638">
    <property type="expression patterns" value="Expressed in jejunal mucosa and 153 other cell types or tissues"/>
</dbReference>
<dbReference type="ExpressionAtlas" id="P41440">
    <property type="expression patterns" value="baseline and differential"/>
</dbReference>
<dbReference type="GO" id="GO:0016324">
    <property type="term" value="C:apical plasma membrane"/>
    <property type="evidence" value="ECO:0000314"/>
    <property type="project" value="BHF-UCL"/>
</dbReference>
<dbReference type="GO" id="GO:0016323">
    <property type="term" value="C:basolateral plasma membrane"/>
    <property type="evidence" value="ECO:0000314"/>
    <property type="project" value="BHF-UCL"/>
</dbReference>
<dbReference type="GO" id="GO:0031526">
    <property type="term" value="C:brush border membrane"/>
    <property type="evidence" value="ECO:0007669"/>
    <property type="project" value="Ensembl"/>
</dbReference>
<dbReference type="GO" id="GO:0005886">
    <property type="term" value="C:plasma membrane"/>
    <property type="evidence" value="ECO:0000314"/>
    <property type="project" value="ARUK-UCL"/>
</dbReference>
<dbReference type="GO" id="GO:0061507">
    <property type="term" value="F:2',3'-cyclic GMP-AMP binding"/>
    <property type="evidence" value="ECO:0000314"/>
    <property type="project" value="UniProtKB"/>
</dbReference>
<dbReference type="GO" id="GO:0015297">
    <property type="term" value="F:antiporter activity"/>
    <property type="evidence" value="ECO:0000314"/>
    <property type="project" value="UniProtKB"/>
</dbReference>
<dbReference type="GO" id="GO:0140360">
    <property type="term" value="F:cyclic-GMP-AMP transmembrane transporter activity"/>
    <property type="evidence" value="ECO:0000314"/>
    <property type="project" value="UniProtKB"/>
</dbReference>
<dbReference type="GO" id="GO:0008518">
    <property type="term" value="F:folate:monoatomic anion antiporter activity"/>
    <property type="evidence" value="ECO:0000314"/>
    <property type="project" value="UniProtKB"/>
</dbReference>
<dbReference type="GO" id="GO:0005542">
    <property type="term" value="F:folic acid binding"/>
    <property type="evidence" value="ECO:0000318"/>
    <property type="project" value="GO_Central"/>
</dbReference>
<dbReference type="GO" id="GO:0008517">
    <property type="term" value="F:folic acid transmembrane transporter activity"/>
    <property type="evidence" value="ECO:0000314"/>
    <property type="project" value="UniProtKB"/>
</dbReference>
<dbReference type="GO" id="GO:0015350">
    <property type="term" value="F:methotrexate transmembrane transporter activity"/>
    <property type="evidence" value="ECO:0000314"/>
    <property type="project" value="UniProtKB"/>
</dbReference>
<dbReference type="GO" id="GO:0008514">
    <property type="term" value="F:organic anion transmembrane transporter activity"/>
    <property type="evidence" value="ECO:0000250"/>
    <property type="project" value="ARUK-UCL"/>
</dbReference>
<dbReference type="GO" id="GO:0042910">
    <property type="term" value="F:xenobiotic transmembrane transporter activity"/>
    <property type="evidence" value="ECO:0000250"/>
    <property type="project" value="ARUK-UCL"/>
</dbReference>
<dbReference type="GO" id="GO:0140361">
    <property type="term" value="P:cyclic-GMP-AMP transmembrane import across plasma membrane"/>
    <property type="evidence" value="ECO:0000314"/>
    <property type="project" value="UniProtKB"/>
</dbReference>
<dbReference type="GO" id="GO:0007565">
    <property type="term" value="P:female pregnancy"/>
    <property type="evidence" value="ECO:0007669"/>
    <property type="project" value="Ensembl"/>
</dbReference>
<dbReference type="GO" id="GO:1904447">
    <property type="term" value="P:folate import across plasma membrane"/>
    <property type="evidence" value="ECO:0000314"/>
    <property type="project" value="UniProtKB"/>
</dbReference>
<dbReference type="GO" id="GO:0098838">
    <property type="term" value="P:folate transmembrane transport"/>
    <property type="evidence" value="ECO:0000314"/>
    <property type="project" value="UniProtKB"/>
</dbReference>
<dbReference type="GO" id="GO:0046655">
    <property type="term" value="P:folic acid metabolic process"/>
    <property type="evidence" value="ECO:0000304"/>
    <property type="project" value="Reactome"/>
</dbReference>
<dbReference type="GO" id="GO:0015884">
    <property type="term" value="P:folic acid transport"/>
    <property type="evidence" value="ECO:0000315"/>
    <property type="project" value="ARUK-UCL"/>
</dbReference>
<dbReference type="GO" id="GO:0051958">
    <property type="term" value="P:methotrexate transport"/>
    <property type="evidence" value="ECO:0000314"/>
    <property type="project" value="UniProtKB"/>
</dbReference>
<dbReference type="GO" id="GO:0015711">
    <property type="term" value="P:organic anion transport"/>
    <property type="evidence" value="ECO:0000250"/>
    <property type="project" value="ARUK-UCL"/>
</dbReference>
<dbReference type="GO" id="GO:0141111">
    <property type="term" value="P:positive regulation of cGAS/STING signaling pathway"/>
    <property type="evidence" value="ECO:0000315"/>
    <property type="project" value="UniProtKB"/>
</dbReference>
<dbReference type="GO" id="GO:0009636">
    <property type="term" value="P:response to toxic substance"/>
    <property type="evidence" value="ECO:0007669"/>
    <property type="project" value="Ensembl"/>
</dbReference>
<dbReference type="GO" id="GO:0009410">
    <property type="term" value="P:response to xenobiotic stimulus"/>
    <property type="evidence" value="ECO:0007669"/>
    <property type="project" value="Ensembl"/>
</dbReference>
<dbReference type="GO" id="GO:0150104">
    <property type="term" value="P:transport across blood-brain barrier"/>
    <property type="evidence" value="ECO:0000304"/>
    <property type="project" value="ARUK-UCL"/>
</dbReference>
<dbReference type="GO" id="GO:0006855">
    <property type="term" value="P:xenobiotic transmembrane transport"/>
    <property type="evidence" value="ECO:0000250"/>
    <property type="project" value="ARUK-UCL"/>
</dbReference>
<dbReference type="CDD" id="cd06174">
    <property type="entry name" value="MFS"/>
    <property type="match status" value="1"/>
</dbReference>
<dbReference type="FunFam" id="1.20.1250.20:FF:000225">
    <property type="entry name" value="Solute carrier family 19 member 1"/>
    <property type="match status" value="1"/>
</dbReference>
<dbReference type="Gene3D" id="1.20.1250.20">
    <property type="entry name" value="MFS general substrate transporter like domains"/>
    <property type="match status" value="1"/>
</dbReference>
<dbReference type="InterPro" id="IPR002666">
    <property type="entry name" value="Folate_carrier"/>
</dbReference>
<dbReference type="InterPro" id="IPR036259">
    <property type="entry name" value="MFS_trans_sf"/>
</dbReference>
<dbReference type="InterPro" id="IPR028339">
    <property type="entry name" value="SLC19A1"/>
</dbReference>
<dbReference type="NCBIfam" id="TIGR00806">
    <property type="entry name" value="rfc"/>
    <property type="match status" value="1"/>
</dbReference>
<dbReference type="PANTHER" id="PTHR10686">
    <property type="entry name" value="FOLATE TRANSPORTER"/>
    <property type="match status" value="1"/>
</dbReference>
<dbReference type="PANTHER" id="PTHR10686:SF12">
    <property type="entry name" value="REDUCED FOLATE TRANSPORTER"/>
    <property type="match status" value="1"/>
</dbReference>
<dbReference type="Pfam" id="PF01770">
    <property type="entry name" value="Folate_carrier"/>
    <property type="match status" value="1"/>
</dbReference>
<dbReference type="PIRSF" id="PIRSF028739">
    <property type="entry name" value="Folate_carrier"/>
    <property type="match status" value="1"/>
</dbReference>
<dbReference type="PIRSF" id="PIRSF500793">
    <property type="entry name" value="Folate_transporter_1"/>
    <property type="match status" value="1"/>
</dbReference>
<dbReference type="SUPFAM" id="SSF103473">
    <property type="entry name" value="MFS general substrate transporter"/>
    <property type="match status" value="1"/>
</dbReference>
<organism>
    <name type="scientific">Homo sapiens</name>
    <name type="common">Human</name>
    <dbReference type="NCBI Taxonomy" id="9606"/>
    <lineage>
        <taxon>Eukaryota</taxon>
        <taxon>Metazoa</taxon>
        <taxon>Chordata</taxon>
        <taxon>Craniata</taxon>
        <taxon>Vertebrata</taxon>
        <taxon>Euteleostomi</taxon>
        <taxon>Mammalia</taxon>
        <taxon>Eutheria</taxon>
        <taxon>Euarchontoglires</taxon>
        <taxon>Primates</taxon>
        <taxon>Haplorrhini</taxon>
        <taxon>Catarrhini</taxon>
        <taxon>Hominidae</taxon>
        <taxon>Homo</taxon>
    </lineage>
</organism>